<reference key="1">
    <citation type="journal article" date="1988" name="Biochem. J.">
        <title>The complete amino acid sequence of human complement factor H.</title>
        <authorList>
            <person name="Ripoche J."/>
            <person name="Day A.J."/>
            <person name="Harris T.J.R."/>
            <person name="Sim R.B."/>
        </authorList>
    </citation>
    <scope>NUCLEOTIDE SEQUENCE [MRNA] (ISOFORMS 1 AND 2)</scope>
    <scope>GLYCOSYLATION AT ASN-529</scope>
    <scope>VARIANTS HIS-402 AND ARG-493</scope>
    <source>
        <tissue>Liver</tissue>
    </source>
</reference>
<reference key="2">
    <citation type="submission" date="2005-10" db="EMBL/GenBank/DDBJ databases">
        <authorList>
            <consortium name="SeattleSNPs variation discovery resource"/>
        </authorList>
    </citation>
    <scope>NUCLEOTIDE SEQUENCE [GENOMIC DNA]</scope>
    <scope>VARIANTS ILE-62; THR-551; ILE-890; ASP-936; ILE-1007; ILE-1017; TYR-1050 AND THR-1059</scope>
</reference>
<reference key="3">
    <citation type="journal article" date="2006" name="Nature">
        <title>The DNA sequence and biological annotation of human chromosome 1.</title>
        <authorList>
            <person name="Gregory S.G."/>
            <person name="Barlow K.F."/>
            <person name="McLay K.E."/>
            <person name="Kaul R."/>
            <person name="Swarbreck D."/>
            <person name="Dunham A."/>
            <person name="Scott C.E."/>
            <person name="Howe K.L."/>
            <person name="Woodfine K."/>
            <person name="Spencer C.C.A."/>
            <person name="Jones M.C."/>
            <person name="Gillson C."/>
            <person name="Searle S."/>
            <person name="Zhou Y."/>
            <person name="Kokocinski F."/>
            <person name="McDonald L."/>
            <person name="Evans R."/>
            <person name="Phillips K."/>
            <person name="Atkinson A."/>
            <person name="Cooper R."/>
            <person name="Jones C."/>
            <person name="Hall R.E."/>
            <person name="Andrews T.D."/>
            <person name="Lloyd C."/>
            <person name="Ainscough R."/>
            <person name="Almeida J.P."/>
            <person name="Ambrose K.D."/>
            <person name="Anderson F."/>
            <person name="Andrew R.W."/>
            <person name="Ashwell R.I.S."/>
            <person name="Aubin K."/>
            <person name="Babbage A.K."/>
            <person name="Bagguley C.L."/>
            <person name="Bailey J."/>
            <person name="Beasley H."/>
            <person name="Bethel G."/>
            <person name="Bird C.P."/>
            <person name="Bray-Allen S."/>
            <person name="Brown J.Y."/>
            <person name="Brown A.J."/>
            <person name="Buckley D."/>
            <person name="Burton J."/>
            <person name="Bye J."/>
            <person name="Carder C."/>
            <person name="Chapman J.C."/>
            <person name="Clark S.Y."/>
            <person name="Clarke G."/>
            <person name="Clee C."/>
            <person name="Cobley V."/>
            <person name="Collier R.E."/>
            <person name="Corby N."/>
            <person name="Coville G.J."/>
            <person name="Davies J."/>
            <person name="Deadman R."/>
            <person name="Dunn M."/>
            <person name="Earthrowl M."/>
            <person name="Ellington A.G."/>
            <person name="Errington H."/>
            <person name="Frankish A."/>
            <person name="Frankland J."/>
            <person name="French L."/>
            <person name="Garner P."/>
            <person name="Garnett J."/>
            <person name="Gay L."/>
            <person name="Ghori M.R.J."/>
            <person name="Gibson R."/>
            <person name="Gilby L.M."/>
            <person name="Gillett W."/>
            <person name="Glithero R.J."/>
            <person name="Grafham D.V."/>
            <person name="Griffiths C."/>
            <person name="Griffiths-Jones S."/>
            <person name="Grocock R."/>
            <person name="Hammond S."/>
            <person name="Harrison E.S.I."/>
            <person name="Hart E."/>
            <person name="Haugen E."/>
            <person name="Heath P.D."/>
            <person name="Holmes S."/>
            <person name="Holt K."/>
            <person name="Howden P.J."/>
            <person name="Hunt A.R."/>
            <person name="Hunt S.E."/>
            <person name="Hunter G."/>
            <person name="Isherwood J."/>
            <person name="James R."/>
            <person name="Johnson C."/>
            <person name="Johnson D."/>
            <person name="Joy A."/>
            <person name="Kay M."/>
            <person name="Kershaw J.K."/>
            <person name="Kibukawa M."/>
            <person name="Kimberley A.M."/>
            <person name="King A."/>
            <person name="Knights A.J."/>
            <person name="Lad H."/>
            <person name="Laird G."/>
            <person name="Lawlor S."/>
            <person name="Leongamornlert D.A."/>
            <person name="Lloyd D.M."/>
            <person name="Loveland J."/>
            <person name="Lovell J."/>
            <person name="Lush M.J."/>
            <person name="Lyne R."/>
            <person name="Martin S."/>
            <person name="Mashreghi-Mohammadi M."/>
            <person name="Matthews L."/>
            <person name="Matthews N.S.W."/>
            <person name="McLaren S."/>
            <person name="Milne S."/>
            <person name="Mistry S."/>
            <person name="Moore M.J.F."/>
            <person name="Nickerson T."/>
            <person name="O'Dell C.N."/>
            <person name="Oliver K."/>
            <person name="Palmeiri A."/>
            <person name="Palmer S.A."/>
            <person name="Parker A."/>
            <person name="Patel D."/>
            <person name="Pearce A.V."/>
            <person name="Peck A.I."/>
            <person name="Pelan S."/>
            <person name="Phelps K."/>
            <person name="Phillimore B.J."/>
            <person name="Plumb R."/>
            <person name="Rajan J."/>
            <person name="Raymond C."/>
            <person name="Rouse G."/>
            <person name="Saenphimmachak C."/>
            <person name="Sehra H.K."/>
            <person name="Sheridan E."/>
            <person name="Shownkeen R."/>
            <person name="Sims S."/>
            <person name="Skuce C.D."/>
            <person name="Smith M."/>
            <person name="Steward C."/>
            <person name="Subramanian S."/>
            <person name="Sycamore N."/>
            <person name="Tracey A."/>
            <person name="Tromans A."/>
            <person name="Van Helmond Z."/>
            <person name="Wall M."/>
            <person name="Wallis J.M."/>
            <person name="White S."/>
            <person name="Whitehead S.L."/>
            <person name="Wilkinson J.E."/>
            <person name="Willey D.L."/>
            <person name="Williams H."/>
            <person name="Wilming L."/>
            <person name="Wray P.W."/>
            <person name="Wu Z."/>
            <person name="Coulson A."/>
            <person name="Vaudin M."/>
            <person name="Sulston J.E."/>
            <person name="Durbin R.M."/>
            <person name="Hubbard T."/>
            <person name="Wooster R."/>
            <person name="Dunham I."/>
            <person name="Carter N.P."/>
            <person name="McVean G."/>
            <person name="Ross M.T."/>
            <person name="Harrow J."/>
            <person name="Olson M.V."/>
            <person name="Beck S."/>
            <person name="Rogers J."/>
            <person name="Bentley D.R."/>
        </authorList>
    </citation>
    <scope>NUCLEOTIDE SEQUENCE [LARGE SCALE GENOMIC DNA]</scope>
    <scope>VARIANT HIS-402</scope>
</reference>
<reference key="4">
    <citation type="journal article" date="2004" name="Genome Res.">
        <title>The status, quality, and expansion of the NIH full-length cDNA project: the Mammalian Gene Collection (MGC).</title>
        <authorList>
            <consortium name="The MGC Project Team"/>
        </authorList>
    </citation>
    <scope>NUCLEOTIDE SEQUENCE [LARGE SCALE MRNA] (ISOFORMS 1 AND 2)</scope>
    <scope>VARIANT ILE-62</scope>
    <source>
        <tissue>Testis</tissue>
        <tissue>Urinary bladder</tissue>
    </source>
</reference>
<reference key="5">
    <citation type="journal article" date="1986" name="Eur. J. Immunol.">
        <title>Human complement factor H: isolation of cDNA clones and partial cDNA sequence of the 38-kDa tryptic fragment containing the binding site for C3b.</title>
        <authorList>
            <person name="Schulz T.F."/>
            <person name="Schwaeble W."/>
            <person name="Stanley K.K."/>
            <person name="Weiss E."/>
            <person name="Dierich M.P."/>
        </authorList>
    </citation>
    <scope>NUCLEOTIDE SEQUENCE [MRNA] OF 53-445</scope>
</reference>
<reference key="6">
    <citation type="journal article" date="1986" name="J. Immunol.">
        <title>Structural analysis of human complement protein H: homology with C4b binding protein, beta 2-glycoprotein I, and the Ba fragment of B2.</title>
        <authorList>
            <person name="Kristensen T."/>
            <person name="Wetsel R.A."/>
            <person name="Tack B.F."/>
        </authorList>
    </citation>
    <scope>NUCLEOTIDE SEQUENCE [MRNA] OF 226-449</scope>
    <scope>PROTEIN SEQUENCE OF 205-216; 237-246; 320-331; 425-435; 508-518; 645-662; 667-717; 858-885; 907-972; 1163-1182 AND 1193-1203</scope>
</reference>
<reference key="7">
    <citation type="journal article" date="1991" name="J. Immunol.">
        <title>Cloning of the 1.4-kb mRNA species of human complement factor H reveals a novel member of the short consensus repeat family related to the carboxy terminal of the classical 150-kDa molecule.</title>
        <authorList>
            <person name="Estaller C."/>
            <person name="Koistinen V."/>
            <person name="Schwaeble W."/>
            <person name="Dierich M.P."/>
            <person name="Weiss E.H."/>
        </authorList>
    </citation>
    <scope>NUCLEOTIDE SEQUENCE [MRNA] OF 1047-1231</scope>
</reference>
<reference key="8">
    <citation type="journal article" date="1982" name="Biochem. J.">
        <title>Purification and structural studies on the complement-system control protein beta 1H (Factor H).</title>
        <authorList>
            <person name="Sim R.B."/>
            <person name="Discipio R.G."/>
        </authorList>
    </citation>
    <scope>PROTEIN SEQUENCE OF 19-35</scope>
</reference>
<reference key="9">
    <citation type="submission" date="1996-04" db="EMBL/GenBank/DDBJ databases">
        <authorList>
            <person name="Vik D.P."/>
            <person name="Williams S.A."/>
        </authorList>
    </citation>
    <scope>NUCLEOTIDE SEQUENCE [GENOMIC DNA] OF 1-19</scope>
</reference>
<reference key="10">
    <citation type="thesis" date="1993" institute="Hospital Trias I Pujol" country="Spain">
        <authorList>
            <person name="Dominguez O."/>
        </authorList>
    </citation>
    <scope>NUCLEOTIDE SEQUENCE [GENOMIC DNA] OF 1-9</scope>
</reference>
<reference key="11">
    <citation type="journal article" date="1980" name="J. Exp. Med.">
        <title>Biosynthesis of the complement components and the regulatory proteins of the alternative complement pathway by human peripheral blood monocytes.</title>
        <authorList>
            <person name="Whaley K."/>
        </authorList>
    </citation>
    <scope>TISSUE SPECIFICITY</scope>
</reference>
<reference key="12">
    <citation type="journal article" date="1988" name="J. Immunol.">
        <title>Synthesis and regulation of complement protein factor H in human skin fibroblasts.</title>
        <authorList>
            <person name="Katz Y."/>
            <person name="Strunk R.C."/>
        </authorList>
    </citation>
    <scope>TISSUE SPECIFICITY</scope>
</reference>
<reference key="13">
    <citation type="journal article" date="1990" name="J. Immunol.">
        <title>Differential regulation of complement factor H and C3 production in human umbilical vein endothelial cells by IFN-gamma and IL-1.</title>
        <authorList>
            <person name="Brooimans R.A."/>
            <person name="van der Ark A.A."/>
            <person name="Buurman W.A."/>
            <person name="van Es L.A."/>
            <person name="Daha M.R."/>
        </authorList>
    </citation>
    <scope>TISSUE SPECIFICITY</scope>
</reference>
<reference key="14">
    <citation type="journal article" date="1998" name="J. Immunol.">
        <title>Human polymorphonuclear leukocytes adhere to complement factor H through an interaction that involves alphaMbeta2 (CD11b/CD18).</title>
        <authorList>
            <person name="DiScipio R.G."/>
            <person name="Daffern P.J."/>
            <person name="Schraufstaetter I.U."/>
            <person name="Sriramarao P."/>
        </authorList>
    </citation>
    <scope>FUNCTION</scope>
    <scope>INTERACTION WITH ITGAM</scope>
</reference>
<reference key="15">
    <citation type="journal article" date="2004" name="Proteomics">
        <title>Screening for N-glycosylated proteins by liquid chromatography mass spectrometry.</title>
        <authorList>
            <person name="Bunkenborg J."/>
            <person name="Pilch B.J."/>
            <person name="Podtelejnikov A.V."/>
            <person name="Wisniewski J.R."/>
        </authorList>
    </citation>
    <scope>GLYCOSYLATION [LARGE SCALE ANALYSIS] AT ASN-882</scope>
    <source>
        <tissue>Plasma</tissue>
    </source>
</reference>
<reference key="16">
    <citation type="journal article" date="2005" name="J. Proteome Res.">
        <title>Human plasma N-glycoproteome analysis by immunoaffinity subtraction, hydrazide chemistry, and mass spectrometry.</title>
        <authorList>
            <person name="Liu T."/>
            <person name="Qian W.-J."/>
            <person name="Gritsenko M.A."/>
            <person name="Camp D.G. II"/>
            <person name="Monroe M.E."/>
            <person name="Moore R.J."/>
            <person name="Smith R.D."/>
        </authorList>
    </citation>
    <scope>GLYCOSYLATION [LARGE SCALE ANALYSIS] AT ASN-529 AND ASN-911</scope>
    <source>
        <tissue>Plasma</tissue>
    </source>
</reference>
<reference key="17">
    <citation type="journal article" date="2007" name="Glycobiology">
        <title>Site-specific N-glycan characterization of human complement factor H.</title>
        <authorList>
            <person name="Fenaille F."/>
            <person name="Le Mignon M."/>
            <person name="Groseil C."/>
            <person name="Ramon C."/>
            <person name="Riande S."/>
            <person name="Siret L."/>
            <person name="Bihoreau N."/>
        </authorList>
    </citation>
    <scope>GLYCOSYLATION AT ASN-529; ASN-718; ASN-802; ASN-822; ASN-882; ASN-911; ASN-1029 AND ASN-1095</scope>
</reference>
<reference key="18">
    <citation type="journal article" date="2008" name="PLoS Pathog.">
        <title>The Staphylococcus aureus protein Sbi acts as a complement inhibitor and forms a tripartite complex with host complement Factor H and C3b.</title>
        <authorList>
            <person name="Haupt K."/>
            <person name="Reuter M."/>
            <person name="van den Elsen J."/>
            <person name="Burman J."/>
            <person name="Haelbich S."/>
            <person name="Richter J."/>
            <person name="Skerka C."/>
            <person name="Zipfel P.F."/>
        </authorList>
    </citation>
    <scope>INTERACTION WITH STAPHYLOCOCCUS AUREUS PROTEIN SBI (MICROBIAL INFECTION)</scope>
</reference>
<reference key="19">
    <citation type="journal article" date="2009" name="J. Proteome Res.">
        <title>Glycoproteomics analysis of human liver tissue by combination of multiple enzyme digestion and hydrazide chemistry.</title>
        <authorList>
            <person name="Chen R."/>
            <person name="Jiang X."/>
            <person name="Sun D."/>
            <person name="Han G."/>
            <person name="Wang F."/>
            <person name="Ye M."/>
            <person name="Wang L."/>
            <person name="Zou H."/>
        </authorList>
    </citation>
    <scope>GLYCOSYLATION [LARGE SCALE ANALYSIS] AT ASN-529; ASN-802; ASN-882; ASN-911 AND ASN-1029</scope>
    <source>
        <tissue>Liver</tissue>
    </source>
</reference>
<reference key="20">
    <citation type="journal article" date="2009" name="Mol. Cell. Proteomics">
        <title>A strategy for precise and large scale identification of core fucosylated glycoproteins.</title>
        <authorList>
            <person name="Jia W."/>
            <person name="Lu Z."/>
            <person name="Fu Y."/>
            <person name="Wang H.P."/>
            <person name="Wang L.H."/>
            <person name="Chi H."/>
            <person name="Yuan Z.F."/>
            <person name="Zheng Z.B."/>
            <person name="Song L.N."/>
            <person name="Han H.H."/>
            <person name="Liang Y.M."/>
            <person name="Wang J.L."/>
            <person name="Cai Y."/>
            <person name="Zhang Y.K."/>
            <person name="Deng Y.L."/>
            <person name="Ying W.T."/>
            <person name="He S.M."/>
            <person name="Qian X.H."/>
        </authorList>
    </citation>
    <scope>GLYCOSYLATION AT ASN-217; ASN-882; ASN-911 AND ASN-1029</scope>
</reference>
<reference key="21">
    <citation type="journal article" date="2009" name="Nat. Methods">
        <title>Enrichment of glycopeptides for glycan structure and attachment site identification.</title>
        <authorList>
            <person name="Nilsson J."/>
            <person name="Rueetschi U."/>
            <person name="Halim A."/>
            <person name="Hesse C."/>
            <person name="Carlsohn E."/>
            <person name="Brinkmalm G."/>
            <person name="Larson G."/>
        </authorList>
    </citation>
    <scope>GLYCOSYLATION [LARGE SCALE ANALYSIS] AT ASN-882</scope>
    <scope>STRUCTURE OF CARBOHYDRATES</scope>
    <source>
        <tissue>Cerebrospinal fluid</tissue>
    </source>
</reference>
<reference key="22">
    <citation type="journal article" date="2010" name="J. Immunol.">
        <title>Factor H and factor H-related protein 1 bind to human neutrophils via complement receptor 3, mediate attachment to Candida albicans, and enhance neutrophil antimicrobial activity.</title>
        <authorList>
            <person name="Losse J."/>
            <person name="Zipfel P.F."/>
            <person name="Jozsi M."/>
        </authorList>
    </citation>
    <scope>FUNCTION</scope>
    <scope>INTERACTION WITH ITGAM</scope>
</reference>
<reference key="23">
    <citation type="journal article" date="2013" name="Cell Host Microbe">
        <title>Malaria parasites co-opt human factor H to prevent complement-mediated lysis in the mosquito midgut.</title>
        <authorList>
            <person name="Simon N."/>
            <person name="Lasonder E."/>
            <person name="Scheuermayer M."/>
            <person name="Kuehn A."/>
            <person name="Tews S."/>
            <person name="Fischer R."/>
            <person name="Zipfel P.F."/>
            <person name="Skerka C."/>
            <person name="Pradel G."/>
        </authorList>
    </citation>
    <scope>FUNCTION (MICROBIAL INFECTION)</scope>
    <scope>INTERACTION WITH P.FALCIPARUM GAP50 (MICROBIAL INFECTION)</scope>
    <scope>SUBCELLULAR LOCATION (MICROBIAL INFECTION)</scope>
</reference>
<reference key="24">
    <citation type="journal article" date="2014" name="J. Proteomics">
        <title>An enzyme assisted RP-RPLC approach for in-depth analysis of human liver phosphoproteome.</title>
        <authorList>
            <person name="Bian Y."/>
            <person name="Song C."/>
            <person name="Cheng K."/>
            <person name="Dong M."/>
            <person name="Wang F."/>
            <person name="Huang J."/>
            <person name="Sun D."/>
            <person name="Wang L."/>
            <person name="Ye M."/>
            <person name="Zou H."/>
        </authorList>
    </citation>
    <scope>IDENTIFICATION BY MASS SPECTROMETRY [LARGE SCALE ANALYSIS]</scope>
    <source>
        <tissue>Liver</tissue>
    </source>
</reference>
<reference key="25">
    <citation type="journal article" date="2014" name="PLoS ONE">
        <title>Complement factor H, vitronectin, and opticin are tyrosine-sulfated proteins of the retinal pigment epithelium.</title>
        <authorList>
            <person name="Kanan Y."/>
            <person name="Siefert J.C."/>
            <person name="Kinter M."/>
            <person name="Al-Ubaidi M.R."/>
        </authorList>
    </citation>
    <scope>TISSUE SPECIFICITY</scope>
    <scope>SULFATION</scope>
</reference>
<reference key="26">
    <citation type="journal article" date="2016" name="J. Immunol.">
        <title>Recruitment of Factor H as a Novel Complement Evasion Strategy for Blood-Stage Plasmodium falciparum Infection.</title>
        <authorList>
            <person name="Kennedy A.T."/>
            <person name="Schmidt C.Q."/>
            <person name="Thompson J.K."/>
            <person name="Weiss G.E."/>
            <person name="Taechalertpaisarn T."/>
            <person name="Gilson P.R."/>
            <person name="Barlow P.N."/>
            <person name="Crabb B.S."/>
            <person name="Cowman A.F."/>
            <person name="Tham W.H."/>
        </authorList>
    </citation>
    <scope>FUNCTION</scope>
    <scope>INTERACTION WITH P.FALCIPARUM PF92 (MICROBIAL INFECTION)</scope>
</reference>
<reference key="27">
    <citation type="journal article" date="1991" name="J. Mol. Biol.">
        <title>Three-dimensional structure of a complement control protein module in solution.</title>
        <authorList>
            <person name="Norman D.G."/>
            <person name="Barlow P.N."/>
            <person name="Baron M."/>
            <person name="Day A.J."/>
            <person name="Sim B."/>
            <person name="Campbell I.D."/>
        </authorList>
    </citation>
    <scope>STRUCTURE BY NMR OF 927-985 (SUSHI 16)</scope>
    <scope>DISULFIDE BOND</scope>
</reference>
<reference key="28">
    <citation type="journal article" date="1992" name="Biochemistry">
        <title>Solution structure of the fifth repeat of factor H: a second example of the complement control protein module.</title>
        <authorList>
            <person name="Barlow P.N."/>
            <person name="Norman D.G."/>
            <person name="Steinkasserer A."/>
            <person name="Horne T.J."/>
            <person name="Pearce J."/>
            <person name="Driscoll P.C."/>
            <person name="Sim B."/>
            <person name="Campbell I.D."/>
        </authorList>
    </citation>
    <scope>STRUCTURE BY NMR OF 264-322 (SUSHI 5)</scope>
</reference>
<reference key="29">
    <citation type="journal article" date="1993" name="J. Mol. Biol.">
        <title>Solution structure of a pair of complement modules by nuclear magnetic resonance.</title>
        <authorList>
            <person name="Barlow P.N."/>
            <person name="Steinkasserer A."/>
            <person name="Norman D.G."/>
            <person name="Kieffer B."/>
            <person name="Wiles A.P."/>
            <person name="Sim B."/>
            <person name="Campbell I.D."/>
        </authorList>
    </citation>
    <scope>STRUCTURE BY NMR OF 866-985 (SUSHIS 15 AND 16)</scope>
    <scope>DISULFIDE BOND</scope>
</reference>
<reference evidence="73" key="30">
    <citation type="journal article" date="2011" name="Nat. Struct. Mol. Biol.">
        <title>Structural basis for engagement by complement factor H of C3b on a self surface.</title>
        <authorList>
            <person name="Morgan H.P."/>
            <person name="Schmidt C.Q."/>
            <person name="Guariento M."/>
            <person name="Blaum B.S."/>
            <person name="Gillespie D."/>
            <person name="Herbert A.P."/>
            <person name="Kavanagh D."/>
            <person name="Mertens H.D."/>
            <person name="Svergun D.I."/>
            <person name="Johansson C.M."/>
            <person name="Uhrin D."/>
            <person name="Barlow P.N."/>
            <person name="Hannan J.P."/>
        </authorList>
    </citation>
    <scope>X-RAY CRYSTALLOGRAPHY (2.10 ANGSTROMS) OF 1107-1231</scope>
    <scope>FUNCTION</scope>
</reference>
<reference key="31">
    <citation type="journal article" date="1997" name="J. Biol. Chem.">
        <title>Human factor H deficiency. Mutations in framework cysteine residues and block in H protein secretion and intracellular catabolism.</title>
        <authorList>
            <person name="Ault B.H."/>
            <person name="Schmidt B.Z."/>
            <person name="Fowler N.L."/>
            <person name="Kashtan C.E."/>
            <person name="Ahmed A.E."/>
            <person name="Vogt B.A."/>
            <person name="Colten H.R."/>
        </authorList>
    </citation>
    <scope>VARIANTS CFHD ARG-536 AND TYR-959</scope>
</reference>
<reference key="32">
    <citation type="journal article" date="1998" name="Kidney Int.">
        <title>Genetic studies into inherited and sporadic hemolytic uremic syndrome.</title>
        <authorList>
            <person name="Warwicker P."/>
            <person name="Goodship T.H.J."/>
            <person name="Donne R.L."/>
            <person name="Pirson Y."/>
            <person name="Nicholls A."/>
            <person name="Ward R.M."/>
            <person name="Turnpenny P."/>
            <person name="Goodship J.A."/>
        </authorList>
    </citation>
    <scope>VARIANT AHUS1 GLY-1215</scope>
</reference>
<reference key="33">
    <citation type="journal article" date="1999" name="Am. J. Hum. Genet.">
        <title>Complement factor H gene mutation associated with autosomal recessive atypical hemolytic uremic syndrome.</title>
        <authorList>
            <person name="Ying L."/>
            <person name="Katz Y."/>
            <person name="Schlesinger M."/>
            <person name="Carmi R."/>
            <person name="Shalev H."/>
            <person name="Haider N."/>
            <person name="Beck G."/>
            <person name="Sheffield V.C."/>
            <person name="Landau D."/>
        </authorList>
    </citation>
    <scope>VARIANT AHUS1 LEU-1191</scope>
</reference>
<reference key="34">
    <citation type="journal article" date="2000" name="Am. J. Hum. Genet.">
        <title>Complement factor H gene mutation associated with autosomal recessive atypical hemolytic uremic syndrome.</title>
        <authorList>
            <person name="Buddles M.R.H."/>
            <person name="Donne R.L."/>
            <person name="Richards A."/>
            <person name="Goodship J."/>
            <person name="Goodship T.H.J."/>
        </authorList>
    </citation>
    <scope>VARIANT AHUS1 1225-TYR--ARG-1231 DELINS PHE-GLN-SER</scope>
</reference>
<reference key="35">
    <citation type="journal article" date="2000" name="Immunogenetics">
        <title>Molecular basis for factor H and FHL-1 deficiency in an Italian family.</title>
        <authorList>
            <person name="Sanchez-Corral P."/>
            <person name="Bellavia D."/>
            <person name="Amico L."/>
            <person name="Brai M."/>
            <person name="Rodriguez de Cordoba S."/>
        </authorList>
    </citation>
    <scope>INVOLVEMENT IN CFHD</scope>
</reference>
<reference key="36">
    <citation type="journal article" date="2001" name="Am. J. Hum. Genet.">
        <title>Clustering of missense mutations in the C-terminal region of factor H in atypical hemolytic uremic syndrome.</title>
        <authorList>
            <person name="Perez-Caballero D."/>
            <person name="Gonzalez-Rubio C."/>
            <person name="Gallardo M.E."/>
            <person name="Vera M."/>
            <person name="Lopez-Trascasa M."/>
            <person name="Rodriguez de Cordoba S."/>
            <person name="Sanchez-Corral P."/>
        </authorList>
    </citation>
    <scope>VARIANTS CFHD MET-956; LEU-1183; ARG-1189 AND ALA-1197</scope>
</reference>
<reference key="37">
    <citation type="journal article" date="2001" name="Am. J. Hum. Genet.">
        <title>Factor H mutations in hemolytic uremic syndrome cluster in exons 18-20, a domain important for host cell recognition.</title>
        <authorList>
            <person name="Richards A."/>
            <person name="Buddles M.R."/>
            <person name="Donne R.L."/>
            <person name="Kaplan B.S."/>
            <person name="Kirk E."/>
            <person name="Venning M.C."/>
            <person name="Tielemans C.L."/>
            <person name="Goodship J.A."/>
            <person name="Goodship T.H.J."/>
        </authorList>
    </citation>
    <scope>VARIANTS CFHD GLU-1076; GLY-1119 AND ARG-1184</scope>
</reference>
<reference key="38">
    <citation type="journal article" date="2001" name="J. Am. Soc. Nephrol.">
        <title>The molecular basis of familial hemolytic uremic syndrome: mutation analysis of factor H gene reveals a hot spot in short consensus repeat 20.</title>
        <authorList>
            <consortium name="Italian registry of familial and recurrent HUS/TTP"/>
            <person name="Caprioli J."/>
            <person name="Bettinaglio P."/>
            <person name="Zipfel P.F."/>
            <person name="Amadei B."/>
            <person name="Daina E."/>
            <person name="Gamba S."/>
            <person name="Skerka C."/>
            <person name="Marziliano N."/>
            <person name="Remuzzi G."/>
            <person name="Noris M."/>
        </authorList>
    </citation>
    <scope>VARIANTS CFHD CYS-1210 AND GLN-1215</scope>
</reference>
<reference key="39">
    <citation type="journal article" date="2002" name="J. Mol. Biol.">
        <title>Molecular modelling of the C-terminal domains of factor H of human complement: a correlation between haemolytic uraemic syndrome and a predicted heparin binding site.</title>
        <authorList>
            <person name="Perkins S.J."/>
            <person name="Goodship T.H.J."/>
        </authorList>
    </citation>
    <scope>VARIANTS AHUS1 MET-956; GLU-1076; GLY-1119; LEU-1183; ARG-1184; ARG-1189; LEU-1191; ASP-1194; ALA-1197; CYS-1210; GLY-1215 AND GLN-1215</scope>
</reference>
<reference key="40">
    <citation type="journal article" date="2002" name="Lancet">
        <title>Combined kidney and liver transplantation for familial haemolytic uraemic syndrome.</title>
        <authorList>
            <person name="Remuzzi G."/>
            <person name="Ruggenenti P."/>
            <person name="Codazzi D."/>
            <person name="Noris M."/>
            <person name="Caprioli J."/>
            <person name="Locatelli G."/>
            <person name="Gridelli B."/>
        </authorList>
    </citation>
    <scope>VARIANT CFHD ARG-1183</scope>
</reference>
<reference key="41">
    <citation type="journal article" date="2003" name="Hum. Mol. Genet.">
        <title>Complement factor H mutations and gene polymorphisms in haemolytic uraemic syndrome: the C-257T, the A2089G and the G2881T polymorphisms are strongly associated with the disease.</title>
        <authorList>
            <consortium name="International registry of recurrent and familial HUS/TTP"/>
            <person name="Caprioli J."/>
            <person name="Castelletti F."/>
            <person name="Bucchioni S."/>
            <person name="Bettinaglio P."/>
            <person name="Bresin E."/>
            <person name="Pianetti G."/>
            <person name="Gamba S."/>
            <person name="Brioschi S."/>
            <person name="Daina E."/>
            <person name="Remuzzi G."/>
            <person name="Noris M."/>
        </authorList>
    </citation>
    <scope>VARIANTS AHUS1 GLY-78; HIS-950; HIS-951; TRP-1163 AND ALA-1198</scope>
    <scope>VARIANT ASP-936</scope>
</reference>
<reference key="42">
    <citation type="journal article" date="2003" name="J. Med. Genet.">
        <title>Haemolytic uraemic syndrome and mutations of the factor H gene: a registry-based study of German speaking countries.</title>
        <authorList>
            <person name="Neumann H.P.H."/>
            <person name="Salzmann M."/>
            <person name="Bohnert-Iwan B."/>
            <person name="Mannuelian T."/>
            <person name="Skerka C."/>
            <person name="Lenk D."/>
            <person name="Bender B.U."/>
            <person name="Cybulla M."/>
            <person name="Riegler P."/>
            <person name="Koenigsrainer A."/>
            <person name="Neyer U."/>
            <person name="Bock A."/>
            <person name="Widmer U."/>
            <person name="Male D.A."/>
            <person name="Franke G."/>
            <person name="Zipfel P.F."/>
        </authorList>
    </citation>
    <scope>VARIANTS AHUS1 TRP-630; LYS-850; CYS-978; PHE-1021; ARG-1043; GLY-1134; ASP-1142; ARG-1157; ARG-1183 AND SER-1226</scope>
</reference>
<reference key="43">
    <citation type="journal article" date="2004" name="J. Am. Soc. Nephrol.">
        <title>Heterozygous and homozygous factor H deficiencies associated with hemolytic uremic syndrome or membranoproliferative glomerulonephritis: report and genetic analysis of 16 cases.</title>
        <authorList>
            <person name="Dragon-Durey M.-A."/>
            <person name="Fremeaux-Bacchi V."/>
            <person name="Loirat C."/>
            <person name="Blouin J."/>
            <person name="Niaudet P."/>
            <person name="Deschenes G."/>
            <person name="Coppo P."/>
            <person name="Herman Fridman W."/>
            <person name="Weiss L."/>
        </authorList>
    </citation>
    <scope>VARIANTS CFHD LEU-127; SER-431 AND SER-673</scope>
    <scope>VARIANTS AHUS1 LYS-400; TYR-673; ARG-893; SER-915; LEU-1183 AND SER-1199</scope>
</reference>
<reference key="44">
    <citation type="journal article" date="2005" name="Am. J. Hum. Genet.">
        <title>Strong association of the Y402H variant in complement factor H at 1q32 with susceptibility to age-related macular degeneration.</title>
        <authorList>
            <person name="Zareparsi S."/>
            <person name="Branham K.E.H."/>
            <person name="Li M."/>
            <person name="Shah S."/>
            <person name="Klein R.J."/>
            <person name="Ott J."/>
            <person name="Hoh J."/>
            <person name="Abecasis G.R."/>
            <person name="Swaroop A."/>
        </authorList>
    </citation>
    <scope>VARIANT HIS-402</scope>
</reference>
<reference key="45">
    <citation type="journal article" date="2005" name="Proc. Natl. Acad. Sci. U.S.A.">
        <title>A common haplotype in the complement regulatory gene factor H (HF1/CFH) predisposes individuals to age-related macular degeneration.</title>
        <authorList>
            <person name="Hageman G.S."/>
            <person name="Anderson D.H."/>
            <person name="Johnson L.V."/>
            <person name="Hancox L.S."/>
            <person name="Taiber A.J."/>
            <person name="Hardisty L.I."/>
            <person name="Hageman J.L."/>
            <person name="Stockman H.A."/>
            <person name="Borchardt J.D."/>
            <person name="Gehrs K.M."/>
            <person name="Smith R.J.H."/>
            <person name="Silvestri G."/>
            <person name="Russell S.R."/>
            <person name="Klaver C.C.W."/>
            <person name="Barbazetto I."/>
            <person name="Chang S."/>
            <person name="Yannuzzi L.A."/>
            <person name="Barile G.R."/>
            <person name="Merriam J.C."/>
            <person name="Smith R.T."/>
            <person name="Olsh A.K."/>
            <person name="Bergeron J."/>
            <person name="Zernant J."/>
            <person name="Merriam J.E."/>
            <person name="Gold B."/>
            <person name="Dean M."/>
            <person name="Allikmets R."/>
        </authorList>
    </citation>
    <scope>VARIANTS ILE-62 AND HIS-402</scope>
    <scope>ASSOCIATION WITH ARMD</scope>
</reference>
<reference key="46">
    <citation type="journal article" date="2005" name="Science">
        <title>Complement factor H polymorphism in age-related macular degeneration.</title>
        <authorList>
            <person name="Klein R.J."/>
            <person name="Zeiss C."/>
            <person name="Chew E.Y."/>
            <person name="Tsai J.-Y."/>
            <person name="Sackler R.S."/>
            <person name="Haynes C."/>
            <person name="Henning A.K."/>
            <person name="SanGiovanni J.P."/>
            <person name="Mane S.M."/>
            <person name="Mayne S.T."/>
            <person name="Bracken M.B."/>
            <person name="Ferris F.L."/>
            <person name="Ott J."/>
            <person name="Barnstable C."/>
            <person name="Hoh J."/>
        </authorList>
    </citation>
    <scope>ASSOCIATION OF VARIANT HIS-402 WITH ARMD</scope>
</reference>
<reference key="47">
    <citation type="journal article" date="2005" name="Science">
        <title>Complement factor H variant increases the risk of age-related macular degeneration.</title>
        <authorList>
            <person name="Haines J.L."/>
            <person name="Hauser M.A."/>
            <person name="Schmidt S."/>
            <person name="Scott W.K."/>
            <person name="Olson L.M."/>
            <person name="Gallins P."/>
            <person name="Spencer K.L."/>
            <person name="Kwan S.Y."/>
            <person name="Noureddine M."/>
            <person name="Gilbert J.R."/>
            <person name="Schnetz-Boutaud N."/>
            <person name="Agarwal A."/>
            <person name="Postel E.A."/>
            <person name="Pericak-Vance M.A."/>
        </authorList>
    </citation>
    <scope>ASSOCIATION OF VARIANT HIS-402 WITH ARMD</scope>
</reference>
<reference key="48">
    <citation type="journal article" date="2005" name="Science">
        <title>Complement factor H polymorphism and age-related macular degeneration.</title>
        <authorList>
            <person name="Edwards A.O."/>
            <person name="Ritter R. III"/>
            <person name="Abel K.J."/>
            <person name="Manning A."/>
            <person name="Panhuysen C."/>
            <person name="Farrer L.A."/>
        </authorList>
    </citation>
    <scope>ASSOCIATION OF VARIANT HIS-402 WITH ARMD</scope>
</reference>
<reference key="49">
    <citation type="journal article" date="2006" name="Kidney Int.">
        <title>Deletion of Lys224 in regulatory domain 4 of factor H reveals a novel pathomechanism for dense deposit disease (MPGN II).</title>
        <authorList>
            <person name="Licht C."/>
            <person name="Heinen S."/>
            <person name="Jozsi M."/>
            <person name="Loeschmann I."/>
            <person name="Saunders R.E."/>
            <person name="Perkins S.J."/>
            <person name="Waldherr R."/>
            <person name="Skerka C."/>
            <person name="Kirschfink M."/>
            <person name="Hoppe B."/>
            <person name="Zipfel P.F."/>
        </authorList>
    </citation>
    <scope>VARIANT CFHD LYS-224 DEL</scope>
    <scope>CHARACTERIZATION OF VARIANT CFHD LYS-224 DEL</scope>
</reference>
<reference key="50">
    <citation type="journal article" date="2006" name="Proc. Natl. Acad. Sci. U.S.A.">
        <title>West Nile virus nonstructural protein NS1 inhibits complement activation by binding the regulatory protein factor H.</title>
        <authorList>
            <person name="Chung K.M."/>
            <person name="Liszewski M.K."/>
            <person name="Nybakken G."/>
            <person name="Davis A.E."/>
            <person name="Townsend R.R."/>
            <person name="Fremont D.H."/>
            <person name="Atkinson J.P."/>
            <person name="Diamond M.S."/>
        </authorList>
    </citation>
    <scope>INTERACTION WITH WEST NILE VIRUS NON-STRUCTURAL PROTEIN 1</scope>
</reference>
<reference key="51">
    <citation type="journal article" date="2008" name="Am. J. Hum. Genet.">
        <title>Basal laminar drusen caused by compound heterozygous variants in the CFH gene.</title>
        <authorList>
            <person name="Boon C.J.F."/>
            <person name="Klevering B.J."/>
            <person name="Hoyng C.B."/>
            <person name="Zonneveld-Vrieling M.N."/>
            <person name="Nabuurs S.B."/>
            <person name="Blokland E."/>
            <person name="Cremers F.P.M."/>
            <person name="den Hollander A.I."/>
        </authorList>
    </citation>
    <scope>INVOLVEMENT IN BASAL LAMINAR DRUSEN</scope>
    <scope>VARIANTS HIS-402; GLY-567; ASP-936; TYR-1050 AND SER-1078</scope>
</reference>
<reference key="52">
    <citation type="journal article" date="2010" name="Hum. Mutat.">
        <title>Mutations in alternative pathway complement proteins in American patients with atypical hemolytic uremic syndrome.</title>
        <authorList>
            <person name="Maga T.K."/>
            <person name="Nishimura C.J."/>
            <person name="Weaver A.E."/>
            <person name="Frees K.L."/>
            <person name="Smith R.J.H."/>
        </authorList>
    </citation>
    <scope>VARIANTS AHUS1 TYR-325; ILE-609; LEU-1169 AND CYS-1183</scope>
    <scope>VARIANT ASP-936</scope>
</reference>
<reference key="53">
    <citation type="journal article" date="2011" name="J. Mol. Cell Biol.">
        <title>Quantitative detection of single amino acid polymorphisms by targeted proteomics.</title>
        <authorList>
            <person name="Su Z.D."/>
            <person name="Sun L."/>
            <person name="Yu D.X."/>
            <person name="Li R.X."/>
            <person name="Li H.X."/>
            <person name="Yu Z.J."/>
            <person name="Sheng Q.H."/>
            <person name="Lin X."/>
            <person name="Zeng R."/>
            <person name="Wu J.R."/>
        </authorList>
    </citation>
    <scope>VARIANTS ILE-62; LYS-850; TYR-959 AND GLU-1143</scope>
    <scope>IDENTIFICATION BY MASS SPECTROMETRY</scope>
</reference>
<reference key="54">
    <citation type="journal article" date="2011" name="Nat. Genet.">
        <title>A rare penetrant mutation in CFH confers high risk of age-related macular degeneration.</title>
        <authorList>
            <person name="Raychaudhuri S."/>
            <person name="Iartchouk O."/>
            <person name="Chin K."/>
            <person name="Tan P.L."/>
            <person name="Tai A.K."/>
            <person name="Ripke S."/>
            <person name="Gowrisankar S."/>
            <person name="Vemuri S."/>
            <person name="Montgomery K."/>
            <person name="Yu Y."/>
            <person name="Reynolds R."/>
            <person name="Zack D.J."/>
            <person name="Campochiaro B."/>
            <person name="Campochiaro P."/>
            <person name="Katsanis N."/>
            <person name="Daly M.J."/>
            <person name="Seddon J.M."/>
        </authorList>
    </citation>
    <scope>VARIANT ARMD4 CYS-1210</scope>
</reference>
<reference key="55">
    <citation type="journal article" date="2006" name="EMBO J.">
        <title>Structure of complement factor H carboxyl-terminus reveals molecular basis of atypical haemolytic uremic syndrome.</title>
        <authorList>
            <person name="Jokiranta T.S."/>
            <person name="Jaakola V.P."/>
            <person name="Lehtinen M.J."/>
            <person name="Paerepalo M."/>
            <person name="Meri S."/>
            <person name="Goldman A."/>
        </authorList>
    </citation>
    <scope>X-RAY CRYSTALLOGRAPHY (1.75 ANGSTROMS) OF 1107-1231</scope>
    <scope>INTERACTION WITH C3B AND GLYCOSAMINOGLYCANS</scope>
    <scope>MUTAGENESIS OF ARG-1182; LYS-1186 AND LYS-1188</scope>
    <scope>DISULFIDE BOND</scope>
    <scope>CHARACTERIZATION OF VARIANTS AHUS1 LEU-1183 AND ALA-1198</scope>
</reference>
<reference key="56">
    <citation type="journal article" date="2007" name="J. Biol. Chem.">
        <title>Structure shows that a glycosaminoglycan and protein recognition site in factor H is perturbed by age-related macular degeneration-linked single nucleotide polymorphism.</title>
        <authorList>
            <person name="Herbert A.P."/>
            <person name="Deakin J.A."/>
            <person name="Schmidt C.Q."/>
            <person name="Blaum B.S."/>
            <person name="Egan C."/>
            <person name="Ferreira V.P."/>
            <person name="Pangburn M.K."/>
            <person name="Lyon M."/>
            <person name="Uhrin D."/>
            <person name="Barlow P.N."/>
        </authorList>
    </citation>
    <scope>STRUCTURE BY NMR OF 386-446</scope>
    <scope>DISULFIDE BONDS</scope>
</reference>
<reference key="57">
    <citation type="journal article" date="2007" name="J. Exp. Med.">
        <title>Structural basis for complement factor H linked age-related macular degeneration.</title>
        <authorList>
            <person name="Prosser B.E."/>
            <person name="Johnson S."/>
            <person name="Roversi P."/>
            <person name="Herbert A.P."/>
            <person name="Blaum B.S."/>
            <person name="Tyrrell J."/>
            <person name="Jowitt T.A."/>
            <person name="Clark S.J."/>
            <person name="Tarelli E."/>
            <person name="Uhrin D."/>
            <person name="Barlow P.N."/>
            <person name="Sim R.B."/>
            <person name="Day A.J."/>
            <person name="Lea S.M."/>
        </authorList>
    </citation>
    <scope>X-RAY CRYSTALLOGRAPHY (2.35 ANGSTROMS) OF 322-506</scope>
    <scope>INTERACTION WITH GLYCOSAMINOGLYCANS</scope>
    <scope>MUTAGENESIS OF HIS-337 AND ARG-341</scope>
    <scope>DISULFIDE BOND</scope>
</reference>
<reference key="58">
    <citation type="journal article" date="2008" name="J. Biol. Chem.">
        <title>Structure of the N-terminal region of complement factor H and conformational implications of disease-linked sequence variations.</title>
        <authorList>
            <person name="Hocking H.G."/>
            <person name="Herbert A.P."/>
            <person name="Kavanagh D."/>
            <person name="Soares D.C."/>
            <person name="Ferreira V.P."/>
            <person name="Pangburn M.K."/>
            <person name="Uhrin D."/>
            <person name="Barlow P.N."/>
        </authorList>
    </citation>
    <scope>STRUCTURE BY NMR OF 20-206</scope>
    <scope>FUNCTION</scope>
    <scope>DOMAIN</scope>
    <scope>DISULFIDE BOND</scope>
</reference>
<reference key="59">
    <citation type="journal article" date="2008" name="J. Mol. Biol.">
        <title>The regulatory SCR-1/5 and cell surface-binding SCR-16/20 fragments of factor H reveal partially folded-back solution structures and different self-associative properties.</title>
        <authorList>
            <person name="Okemefuna A.I."/>
            <person name="Gilbert H.E."/>
            <person name="Griggs K.M."/>
            <person name="Ormsby R.J."/>
            <person name="Gordon D.L."/>
            <person name="Perkins S.J."/>
        </authorList>
    </citation>
    <scope>X-RAY CRYSTALLOGRAPHY (2.35 ANGSTROMS) OF 322-506</scope>
    <scope>SUBUNIT</scope>
</reference>
<reference key="60">
    <citation type="journal article" date="2009" name="J. Mol. Biol.">
        <title>Electrostatic interactions contribute to the folded-back conformation of wild type human factor H.</title>
        <authorList>
            <person name="Okemefuna A.I."/>
            <person name="Nan R."/>
            <person name="Gor J."/>
            <person name="Perkins S.J."/>
        </authorList>
    </citation>
    <scope>X-RAY CRYSTALLOGRAPHY (2.70 ANGSTROMS) OF 18-264</scope>
    <scope>SUBUNIT</scope>
</reference>
<reference key="61">
    <citation type="journal article" date="2009" name="Nat. Immunol.">
        <title>Structure of complement fragment C3b-factor H and implications for host protection by complement regulators.</title>
        <authorList>
            <person name="Wu J."/>
            <person name="Wu Y.Q."/>
            <person name="Ricklin D."/>
            <person name="Janssen B.J."/>
            <person name="Lambris J.D."/>
            <person name="Gros P."/>
        </authorList>
    </citation>
    <scope>X-RAY CRYSTALLOGRAPHY (2.70 ANGSTROMS) OF 18-264</scope>
    <scope>INTERACTION WITH PROTEIN C3B</scope>
    <scope>FUNCTION</scope>
    <scope>DISULFIDE BOND</scope>
</reference>
<reference key="62">
    <citation type="journal article" date="2009" name="Nature">
        <title>Neisseria meningitidis recruits factor H using protein mimicry of host carbohydrates.</title>
        <authorList>
            <person name="Schneider M.C."/>
            <person name="Prosser B.E."/>
            <person name="Caesar J.J."/>
            <person name="Kugelberg E."/>
            <person name="Li S."/>
            <person name="Zhang Q."/>
            <person name="Quoraishi S."/>
            <person name="Lovett J.E."/>
            <person name="Deane J.E."/>
            <person name="Sim R.B."/>
            <person name="Roversi P."/>
            <person name="Johnson S."/>
            <person name="Tang C.M."/>
            <person name="Lea S.M."/>
        </authorList>
    </citation>
    <scope>X-RAY CRYSTALLOGRAPHY (2.35 ANGSTROMS) OF 321-443</scope>
    <scope>INTERACTION WITH NEISSERIA MENINGITIDIS PROTEIN FHBP (MICROBIAL INFECTION)</scope>
    <scope>DISULFIDE BOND</scope>
</reference>
<reference key="63">
    <citation type="journal article" date="2010" name="J. Mol. Biol.">
        <title>The central portion of factor H (modules 10-15) is compact and contains a structurally deviant CCP module.</title>
        <authorList>
            <person name="Schmidt C.Q."/>
            <person name="Herbert A.P."/>
            <person name="Mertens H.D."/>
            <person name="Guariento M."/>
            <person name="Soares D.C."/>
            <person name="Uhrin D."/>
            <person name="Rowe A.J."/>
            <person name="Svergun D.I."/>
            <person name="Barlow P.N."/>
        </authorList>
    </citation>
    <scope>STRUCTURE BY NMR OF 690-804</scope>
    <scope>DISULFIDE BONDS</scope>
</reference>
<reference key="64">
    <citation type="journal article" date="2010" name="Mol. Immunol.">
        <title>Both domain 19 and domain 20 of factor H are involved in binding to complement C3b and C3d.</title>
        <authorList>
            <person name="Bhattacharjee A."/>
            <person name="Lehtinen M.J."/>
            <person name="Kajander T."/>
            <person name="Goldman A."/>
            <person name="Jokiranta T.S."/>
        </authorList>
    </citation>
    <scope>X-RAY CRYSTALLOGRAPHY (1.65 ANGSTROMS) OF 1103-1231</scope>
    <scope>INTERACTION WITH C3B AND C3D</scope>
    <scope>DISULFIDE BOND</scope>
</reference>
<reference key="65">
    <citation type="journal article" date="2011" name="Proc. Natl. Acad. Sci. U.S.A.">
        <title>Dual interaction of factor H with C3d and glycosaminoglycans in host-nonhost discrimination by complement.</title>
        <authorList>
            <person name="Kajander T."/>
            <person name="Lehtinen M.J."/>
            <person name="Hyvaerinen S."/>
            <person name="Bhattacharjee A."/>
            <person name="Leung E."/>
            <person name="Isenman D.E."/>
            <person name="Meri S."/>
            <person name="Goldman A."/>
            <person name="Jokiranta T.S."/>
        </authorList>
    </citation>
    <scope>X-RAY CRYSTALLOGRAPHY (2.31 ANGSTROMS) OF 1103-1231</scope>
    <scope>INTERACTION WITH C3B AND C3D</scope>
    <scope>FUNCTION</scope>
    <scope>DOMAIN</scope>
    <scope>DISULFIDE BOND</scope>
</reference>
<reference key="66">
    <citation type="journal article" date="2012" name="PLoS Pathog.">
        <title>Design and evaluation of meningococcal vaccines through structure-based modification of host and pathogen molecules.</title>
        <authorList>
            <person name="Johnson S."/>
            <person name="Tan L."/>
            <person name="van der Veen S."/>
            <person name="Caesar J."/>
            <person name="Goicoechea De Jorge E."/>
            <person name="Harding R.J."/>
            <person name="Bai X."/>
            <person name="Exley R.M."/>
            <person name="Ward P.N."/>
            <person name="Ruivo N."/>
            <person name="Trivedi K."/>
            <person name="Cumber E."/>
            <person name="Jones R."/>
            <person name="Newham L."/>
            <person name="Staunton D."/>
            <person name="Ufret-Vincenty R."/>
            <person name="Borrow R."/>
            <person name="Pickering M.C."/>
            <person name="Lea S.M."/>
            <person name="Tang C.M."/>
        </authorList>
    </citation>
    <scope>X-RAY CRYSTALLOGRAPHY (2.31 ANGSTROMS) OF 321-443</scope>
    <scope>INTERACTION WITH NEISSERIA MENINGITIDIS PROTEIN FHBP (MICROBIAL INFECTION)</scope>
    <scope>DISULFIDE BOND</scope>
</reference>
<reference key="67">
    <citation type="journal article" date="2012" name="J. Mol. Biol.">
        <title>Solution structure of CCP modules 10-12 illuminates functional architecture of the complement regulator, factor H.</title>
        <authorList>
            <person name="Makou E."/>
            <person name="Mertens H.D."/>
            <person name="Maciejewski M."/>
            <person name="Soares D.C."/>
            <person name="Matis I."/>
            <person name="Schmidt C.Q."/>
            <person name="Herbert A.P."/>
            <person name="Svergun D.I."/>
            <person name="Barlow P.N."/>
        </authorList>
    </citation>
    <scope>STRUCTURE BY NMR OF 566-687</scope>
    <scope>DISULFIDE BONDS</scope>
</reference>
<reference key="68">
    <citation type="journal article" date="2012" name="PLoS ONE">
        <title>Structural analysis of the C-terminal region (modules 18-20) of complement regulator factor H (FH).</title>
        <authorList>
            <person name="Morgan H.P."/>
            <person name="Mertens H.D."/>
            <person name="Guariento M."/>
            <person name="Schmidt C.Q."/>
            <person name="Soares D.C."/>
            <person name="Svergun D.I."/>
            <person name="Herbert A.P."/>
            <person name="Barlow P.N."/>
            <person name="Hannan J.P."/>
        </authorList>
    </citation>
    <scope>X-RAY CRYSTALLOGRAPHY (1.80 ANGSTROMS) OF 1046-1231</scope>
    <scope>DISULFIDE BONDS</scope>
</reference>
<reference key="69">
    <citation type="journal article" date="2013" name="J. Biol. Chem.">
        <title>Structural basis for complement evasion by Lyme disease pathogen Borrelia burgdorferi.</title>
        <authorList>
            <person name="Bhattacharjee A."/>
            <person name="Oeemig J.S."/>
            <person name="Kolodziejczyk R."/>
            <person name="Meri T."/>
            <person name="Kajander T."/>
            <person name="Lehtinen M.J."/>
            <person name="Iwai H."/>
            <person name="Jokiranta T.S."/>
            <person name="Goldman A."/>
        </authorList>
    </citation>
    <scope>X-RAY CRYSTALLOGRAPHY (2.83 ANGSTROMS) OF 1103-1231</scope>
    <scope>INTERACTION WITH BORRELIA BURGDORFERI OUTER SURFACE PROTEIN E/OSPE (MICROBIAL INFECTION)</scope>
    <scope>DISULFIDE BOND</scope>
</reference>
<reference key="70">
    <citation type="journal article" date="2013" name="J. Infect. Dis.">
        <title>Glycerol-3-phosphate dehydrogenase 2 is a novel factor H-, factor H-like protein 1-, and plasminogen-binding surface protein of Candida albicans.</title>
        <authorList>
            <person name="Luo S."/>
            <person name="Hoffmann R."/>
            <person name="Skerka C."/>
            <person name="Zipfel P.F."/>
        </authorList>
    </citation>
    <scope>INTERACTION WITH C.ALBICANS GPD2 (MICROBIAL INFECTION)</scope>
</reference>
<reference key="71">
    <citation type="journal article" date="2015" name="Biochem. J.">
        <title>Structural determinants of host specificity of complement Factor H recruitment by Streptococcus pneumoniae.</title>
        <authorList>
            <person name="Achila D."/>
            <person name="Liu A."/>
            <person name="Banerjee R."/>
            <person name="Li Y."/>
            <person name="Martinez-Hackert E."/>
            <person name="Zhang J.R."/>
            <person name="Yan H."/>
        </authorList>
    </citation>
    <scope>X-RAY CRYSTALLOGRAPHY (1.08 ANGSTROMS) OF 508-567</scope>
    <scope>INTERACTION WITH STREPTOCOCCUS PNEUMONIAE PROTEIN VIRULENCE FACTOR CHOLINE-BINDING PROTEIN A/CBPAN (MICROBIAL INFECTION)</scope>
    <scope>DISULFIDE BOND</scope>
</reference>
<reference key="72">
    <citation type="journal article" date="2015" name="Nat. Chem. Biol.">
        <title>Structural basis for sialic acid-mediated self-recognition by complement factor H.</title>
        <authorList>
            <person name="Blaum B.S."/>
            <person name="Hannan J.P."/>
            <person name="Herbert A.P."/>
            <person name="Kavanagh D."/>
            <person name="Uhrin D."/>
            <person name="Stehle T."/>
        </authorList>
    </citation>
    <scope>X-RAY CRYSTALLOGRAPHY (2.15 ANGSTROMS) OF 1107-1231</scope>
    <scope>FUNCTION</scope>
    <scope>DISULFIDE BOND</scope>
</reference>
<reference key="73">
    <citation type="journal article" date="2017" name="Biochem. J.">
        <title>Staphylococcus aureus SdrE captures complement factor H's C-terminus via a novel 'close, dock, lock and latch' mechanism for complement evasion.</title>
        <authorList>
            <person name="Zhang Y."/>
            <person name="Wu M."/>
            <person name="Hang T."/>
            <person name="Wang C."/>
            <person name="Yang Y."/>
            <person name="Pan W."/>
            <person name="Zang J."/>
            <person name="Zhang M."/>
            <person name="Zhang X."/>
        </authorList>
    </citation>
    <scope>X-RAY CRYSTALLOGRAPHY (3.30 ANGSTROMS) OF 1206-1226</scope>
    <scope>INTERACTION WITH STAPHYLOCOCCUS AUREUS SURFACE PROTEIN SERINE-ASPARTATE REPEAT PROTEIN E/SDRE (MICROBIAL INFECTION)</scope>
</reference>
<reference key="74">
    <citation type="journal article" date="2017" name="Nat. Struct. Mol. Biol.">
        <title>Regulator-dependent mechanisms of C3b processing by factor I allow differentiation of immune responses.</title>
        <authorList>
            <person name="Xue X."/>
            <person name="Wu J."/>
            <person name="Ricklin D."/>
            <person name="Forneris F."/>
            <person name="Di Crescenzio P."/>
            <person name="Schmidt C.Q."/>
            <person name="Granneman J."/>
            <person name="Sharp T.H."/>
            <person name="Lambris J.D."/>
            <person name="Gros P."/>
        </authorList>
    </citation>
    <scope>X-RAY CRYSTALLOGRAPHY (4.20 ANGSTROMS) OF 19-388 IN COMPLEX WITH CFH AND C3B</scope>
    <scope>DISULFIDE BONDS</scope>
    <scope>FUNCTION</scope>
</reference>
<reference key="75">
    <citation type="journal article" date="2017" name="PLoS ONE">
        <title>Crystal structure of a tripartite complex between C3dg, C-terminal domains of factor H and OspE of Borrelia burgdorferi.</title>
        <authorList>
            <person name="Kolodziejczyk R."/>
            <person name="Mikula K.M."/>
            <person name="Kotila T."/>
            <person name="Postis V.L.G."/>
            <person name="Jokiranta T.S."/>
            <person name="Goldman A."/>
            <person name="Meri T."/>
        </authorList>
    </citation>
    <scope>X-RAY CRYSTALLOGRAPHY (3.18 ANGSTROMS) OF 1104-1230</scope>
    <scope>INTERACTION WITH CD3D AND BORRELIA BURGDORFERI OUTER SURFACE PROTEIN E/OSPE (MICROBIAL INFECTION)</scope>
    <scope>DISULFIDE BOND</scope>
</reference>
<reference key="76">
    <citation type="journal article" date="2022" name="Cell Rep.">
        <title>Estrogen promotes innate immune evasion of Candida albicans through inactivation of the alternative complement system.</title>
        <authorList>
            <person name="Kumwenda P."/>
            <person name="Cottier F."/>
            <person name="Hendry A.C."/>
            <person name="Kneafsey D."/>
            <person name="Keevan B."/>
            <person name="Gallagher H."/>
            <person name="Tsai H.J."/>
            <person name="Hall R.A."/>
        </authorList>
    </citation>
    <scope>INTERACTION WITH C.ALBICANS GPD2 (MICROBIAL INFECTION)</scope>
</reference>
<proteinExistence type="evidence at protein level"/>
<protein>
    <recommendedName>
        <fullName>Complement factor H</fullName>
    </recommendedName>
    <alternativeName>
        <fullName>H factor 1</fullName>
    </alternativeName>
</protein>
<dbReference type="EMBL" id="Y00716">
    <property type="protein sequence ID" value="CAA68704.1"/>
    <property type="molecule type" value="mRNA"/>
</dbReference>
<dbReference type="EMBL" id="DQ233256">
    <property type="protein sequence ID" value="ABB02180.1"/>
    <property type="molecule type" value="Genomic_DNA"/>
</dbReference>
<dbReference type="EMBL" id="AL049744">
    <property type="status" value="NOT_ANNOTATED_CDS"/>
    <property type="molecule type" value="Genomic_DNA"/>
</dbReference>
<dbReference type="EMBL" id="BC037285">
    <property type="protein sequence ID" value="AAH37285.1"/>
    <property type="molecule type" value="mRNA"/>
</dbReference>
<dbReference type="EMBL" id="BC110643">
    <property type="protein sequence ID" value="AAI10644.1"/>
    <property type="molecule type" value="mRNA"/>
</dbReference>
<dbReference type="EMBL" id="BC142699">
    <property type="protein sequence ID" value="AAI42700.1"/>
    <property type="molecule type" value="mRNA"/>
</dbReference>
<dbReference type="EMBL" id="X04697">
    <property type="protein sequence ID" value="CAB41739.1"/>
    <property type="status" value="ALT_FRAME"/>
    <property type="molecule type" value="mRNA"/>
</dbReference>
<dbReference type="EMBL" id="X07523">
    <property type="protein sequence ID" value="CAA30403.1"/>
    <property type="molecule type" value="mRNA"/>
</dbReference>
<dbReference type="EMBL" id="M12383">
    <property type="protein sequence ID" value="AAA52013.1"/>
    <property type="molecule type" value="mRNA"/>
</dbReference>
<dbReference type="EMBL" id="M65294">
    <property type="protein sequence ID" value="AAA35948.1"/>
    <property type="molecule type" value="mRNA"/>
</dbReference>
<dbReference type="EMBL" id="U56979">
    <property type="protein sequence ID" value="AAB01987.1"/>
    <property type="molecule type" value="Genomic_DNA"/>
</dbReference>
<dbReference type="EMBL" id="Z29665">
    <property type="protein sequence ID" value="CAA82763.1"/>
    <property type="molecule type" value="Genomic_DNA"/>
</dbReference>
<dbReference type="CCDS" id="CCDS1385.1">
    <molecule id="P08603-1"/>
</dbReference>
<dbReference type="CCDS" id="CCDS53452.1">
    <molecule id="P08603-2"/>
</dbReference>
<dbReference type="PIR" id="S00254">
    <property type="entry name" value="NBHUH"/>
</dbReference>
<dbReference type="PIR" id="S03013">
    <property type="entry name" value="NBHUHS"/>
</dbReference>
<dbReference type="RefSeq" id="NP_000177.2">
    <property type="nucleotide sequence ID" value="NM_000186.3"/>
</dbReference>
<dbReference type="PDB" id="1HAQ">
    <property type="method" value="X-ray"/>
    <property type="chains" value="A=19-1231"/>
</dbReference>
<dbReference type="PDB" id="1HCC">
    <property type="method" value="NMR"/>
    <property type="chains" value="A=927-985"/>
</dbReference>
<dbReference type="PDB" id="1HFH">
    <property type="method" value="NMR"/>
    <property type="chains" value="A=866-985"/>
</dbReference>
<dbReference type="PDB" id="1HFI">
    <property type="method" value="NMR"/>
    <property type="chains" value="A=866-927"/>
</dbReference>
<dbReference type="PDB" id="2BZM">
    <property type="method" value="NMR"/>
    <property type="chains" value="A=1107-1231"/>
</dbReference>
<dbReference type="PDB" id="2G7I">
    <property type="method" value="X-ray"/>
    <property type="resolution" value="1.75 A"/>
    <property type="chains" value="A=1107-1231"/>
</dbReference>
<dbReference type="PDB" id="2IC4">
    <property type="method" value="X-ray"/>
    <property type="chains" value="A=321-506"/>
</dbReference>
<dbReference type="PDB" id="2JGW">
    <property type="method" value="NMR"/>
    <property type="chains" value="A=386-446"/>
</dbReference>
<dbReference type="PDB" id="2JGX">
    <property type="method" value="NMR"/>
    <property type="chains" value="A=386-446"/>
</dbReference>
<dbReference type="PDB" id="2KMS">
    <property type="method" value="NMR"/>
    <property type="chains" value="A=690-804"/>
</dbReference>
<dbReference type="PDB" id="2QFG">
    <property type="method" value="X-ray"/>
    <property type="chains" value="A=19-322"/>
</dbReference>
<dbReference type="PDB" id="2QFH">
    <property type="method" value="X-ray"/>
    <property type="chains" value="A=928-1231"/>
</dbReference>
<dbReference type="PDB" id="2RLP">
    <property type="method" value="NMR"/>
    <property type="chains" value="A=20-142"/>
</dbReference>
<dbReference type="PDB" id="2RLQ">
    <property type="method" value="NMR"/>
    <property type="chains" value="A=84-206"/>
</dbReference>
<dbReference type="PDB" id="2UWN">
    <property type="method" value="X-ray"/>
    <property type="resolution" value="2.35 A"/>
    <property type="chains" value="A=322-506"/>
</dbReference>
<dbReference type="PDB" id="2V8E">
    <property type="method" value="X-ray"/>
    <property type="resolution" value="2.50 A"/>
    <property type="chains" value="A=322-506"/>
</dbReference>
<dbReference type="PDB" id="2W80">
    <property type="method" value="X-ray"/>
    <property type="resolution" value="2.35 A"/>
    <property type="chains" value="A/B/E/G=321-443"/>
</dbReference>
<dbReference type="PDB" id="2W81">
    <property type="method" value="X-ray"/>
    <property type="resolution" value="2.35 A"/>
    <property type="chains" value="A/B/E=321-443"/>
</dbReference>
<dbReference type="PDB" id="2WII">
    <property type="method" value="X-ray"/>
    <property type="resolution" value="2.70 A"/>
    <property type="chains" value="C=18-264"/>
</dbReference>
<dbReference type="PDB" id="2XQW">
    <property type="method" value="X-ray"/>
    <property type="resolution" value="2.31 A"/>
    <property type="chains" value="C=1103-1231"/>
</dbReference>
<dbReference type="PDB" id="3GAU">
    <property type="method" value="X-ray"/>
    <property type="chains" value="A=19-1231"/>
</dbReference>
<dbReference type="PDB" id="3GAV">
    <property type="method" value="X-ray"/>
    <property type="chains" value="A=19-1231"/>
</dbReference>
<dbReference type="PDB" id="3GAW">
    <property type="method" value="X-ray"/>
    <property type="chains" value="A=19-1231"/>
</dbReference>
<dbReference type="PDB" id="3KXV">
    <property type="method" value="X-ray"/>
    <property type="resolution" value="2.00 A"/>
    <property type="chains" value="A=1103-1231"/>
</dbReference>
<dbReference type="PDB" id="3KZJ">
    <property type="method" value="X-ray"/>
    <property type="resolution" value="1.65 A"/>
    <property type="chains" value="A=1103-1231"/>
</dbReference>
<dbReference type="PDB" id="3OXU">
    <property type="method" value="X-ray"/>
    <property type="resolution" value="2.10 A"/>
    <property type="chains" value="D/E/F=1107-1231"/>
</dbReference>
<dbReference type="PDB" id="3R62">
    <property type="method" value="X-ray"/>
    <property type="resolution" value="1.52 A"/>
    <property type="chains" value="A/B=1107-1231"/>
</dbReference>
<dbReference type="PDB" id="3RJ3">
    <property type="method" value="X-ray"/>
    <property type="resolution" value="2.35 A"/>
    <property type="chains" value="D/E/F=1107-1231"/>
</dbReference>
<dbReference type="PDB" id="3SW0">
    <property type="method" value="X-ray"/>
    <property type="resolution" value="1.80 A"/>
    <property type="chains" value="X=1046-1231"/>
</dbReference>
<dbReference type="PDB" id="4AYD">
    <property type="method" value="X-ray"/>
    <property type="resolution" value="2.40 A"/>
    <property type="chains" value="A/B/E=321-443"/>
</dbReference>
<dbReference type="PDB" id="4AYE">
    <property type="method" value="X-ray"/>
    <property type="resolution" value="2.80 A"/>
    <property type="chains" value="A/B/E=321-443"/>
</dbReference>
<dbReference type="PDB" id="4AYI">
    <property type="method" value="X-ray"/>
    <property type="resolution" value="2.31 A"/>
    <property type="chains" value="A/E=321-443"/>
</dbReference>
<dbReference type="PDB" id="4AYM">
    <property type="method" value="X-ray"/>
    <property type="resolution" value="3.00 A"/>
    <property type="chains" value="A/B/E/F=321-443"/>
</dbReference>
<dbReference type="PDB" id="4B2R">
    <property type="method" value="NMR"/>
    <property type="chains" value="A=566-687"/>
</dbReference>
<dbReference type="PDB" id="4B2S">
    <property type="method" value="NMR"/>
    <property type="chains" value="A=627-747"/>
</dbReference>
<dbReference type="PDB" id="4J38">
    <property type="method" value="X-ray"/>
    <property type="resolution" value="2.83 A"/>
    <property type="chains" value="B=1103-1231"/>
</dbReference>
<dbReference type="PDB" id="4K12">
    <property type="method" value="X-ray"/>
    <property type="resolution" value="1.08 A"/>
    <property type="chains" value="A=508-567"/>
</dbReference>
<dbReference type="PDB" id="4ONT">
    <property type="method" value="X-ray"/>
    <property type="resolution" value="2.15 A"/>
    <property type="chains" value="D/E/F=1107-1231"/>
</dbReference>
<dbReference type="PDB" id="4ZH1">
    <property type="method" value="X-ray"/>
    <property type="resolution" value="2.24 A"/>
    <property type="chains" value="D/E/F=1107-1231"/>
</dbReference>
<dbReference type="PDB" id="5NBQ">
    <property type="method" value="X-ray"/>
    <property type="resolution" value="3.18 A"/>
    <property type="chains" value="D/E/F=1104-1230"/>
</dbReference>
<dbReference type="PDB" id="5O32">
    <property type="method" value="X-ray"/>
    <property type="resolution" value="4.21 A"/>
    <property type="chains" value="C/G=19-387"/>
</dbReference>
<dbReference type="PDB" id="5O35">
    <property type="method" value="X-ray"/>
    <property type="resolution" value="4.20 A"/>
    <property type="chains" value="C=19-388"/>
</dbReference>
<dbReference type="PDB" id="5WTB">
    <property type="method" value="X-ray"/>
    <property type="resolution" value="3.30 A"/>
    <property type="chains" value="E/F/G/H=1206-1226"/>
</dbReference>
<dbReference type="PDB" id="6ATG">
    <property type="method" value="X-ray"/>
    <property type="resolution" value="1.80 A"/>
    <property type="chains" value="A/D=388-446"/>
</dbReference>
<dbReference type="PDB" id="6ZH1">
    <property type="method" value="X-ray"/>
    <property type="resolution" value="2.20 A"/>
    <property type="chains" value="B=1104-1231"/>
</dbReference>
<dbReference type="PDB" id="7WKI">
    <property type="method" value="X-ray"/>
    <property type="resolution" value="2.60 A"/>
    <property type="chains" value="A=1046-1231"/>
</dbReference>
<dbReference type="PDB" id="7ZJM">
    <property type="method" value="X-ray"/>
    <property type="resolution" value="2.59 A"/>
    <property type="chains" value="B=321-444"/>
</dbReference>
<dbReference type="PDB" id="9F7I">
    <property type="method" value="X-ray"/>
    <property type="resolution" value="2.85 A"/>
    <property type="chains" value="B=321-444"/>
</dbReference>
<dbReference type="PDBsum" id="1HAQ"/>
<dbReference type="PDBsum" id="1HCC"/>
<dbReference type="PDBsum" id="1HFH"/>
<dbReference type="PDBsum" id="1HFI"/>
<dbReference type="PDBsum" id="2BZM"/>
<dbReference type="PDBsum" id="2G7I"/>
<dbReference type="PDBsum" id="2IC4"/>
<dbReference type="PDBsum" id="2JGW"/>
<dbReference type="PDBsum" id="2JGX"/>
<dbReference type="PDBsum" id="2KMS"/>
<dbReference type="PDBsum" id="2QFG"/>
<dbReference type="PDBsum" id="2QFH"/>
<dbReference type="PDBsum" id="2RLP"/>
<dbReference type="PDBsum" id="2RLQ"/>
<dbReference type="PDBsum" id="2UWN"/>
<dbReference type="PDBsum" id="2V8E"/>
<dbReference type="PDBsum" id="2W80"/>
<dbReference type="PDBsum" id="2W81"/>
<dbReference type="PDBsum" id="2WII"/>
<dbReference type="PDBsum" id="2XQW"/>
<dbReference type="PDBsum" id="3GAU"/>
<dbReference type="PDBsum" id="3GAV"/>
<dbReference type="PDBsum" id="3GAW"/>
<dbReference type="PDBsum" id="3KXV"/>
<dbReference type="PDBsum" id="3KZJ"/>
<dbReference type="PDBsum" id="3OXU"/>
<dbReference type="PDBsum" id="3R62"/>
<dbReference type="PDBsum" id="3RJ3"/>
<dbReference type="PDBsum" id="3SW0"/>
<dbReference type="PDBsum" id="4AYD"/>
<dbReference type="PDBsum" id="4AYE"/>
<dbReference type="PDBsum" id="4AYI"/>
<dbReference type="PDBsum" id="4AYM"/>
<dbReference type="PDBsum" id="4B2R"/>
<dbReference type="PDBsum" id="4B2S"/>
<dbReference type="PDBsum" id="4J38"/>
<dbReference type="PDBsum" id="4K12"/>
<dbReference type="PDBsum" id="4ONT"/>
<dbReference type="PDBsum" id="4ZH1"/>
<dbReference type="PDBsum" id="5NBQ"/>
<dbReference type="PDBsum" id="5O32"/>
<dbReference type="PDBsum" id="5O35"/>
<dbReference type="PDBsum" id="5WTB"/>
<dbReference type="PDBsum" id="6ATG"/>
<dbReference type="PDBsum" id="6ZH1"/>
<dbReference type="PDBsum" id="7WKI"/>
<dbReference type="PDBsum" id="7ZJM"/>
<dbReference type="PDBsum" id="9F7I"/>
<dbReference type="SASBDB" id="P08603"/>
<dbReference type="SMR" id="P08603"/>
<dbReference type="BioGRID" id="109324">
    <property type="interactions" value="144"/>
</dbReference>
<dbReference type="ComplexPortal" id="CPX-6163">
    <property type="entry name" value="Complement factor H complex"/>
</dbReference>
<dbReference type="ComplexPortal" id="CPX-6164">
    <property type="entry name" value="Complement factor I-H-C3b complex"/>
</dbReference>
<dbReference type="DIP" id="DIP-38303N"/>
<dbReference type="FunCoup" id="P08603">
    <property type="interactions" value="161"/>
</dbReference>
<dbReference type="IntAct" id="P08603">
    <property type="interactions" value="47"/>
</dbReference>
<dbReference type="MINT" id="P08603"/>
<dbReference type="STRING" id="9606.ENSP00000356399"/>
<dbReference type="BindingDB" id="P08603"/>
<dbReference type="ChEMBL" id="CHEMBL4629"/>
<dbReference type="DrugBank" id="DB09130">
    <property type="generic name" value="Copper"/>
</dbReference>
<dbReference type="DrugBank" id="DB01593">
    <property type="generic name" value="Zinc"/>
</dbReference>
<dbReference type="DrugBank" id="DB14487">
    <property type="generic name" value="Zinc acetate"/>
</dbReference>
<dbReference type="DrugBank" id="DB14533">
    <property type="generic name" value="Zinc chloride"/>
</dbReference>
<dbReference type="DrugBank" id="DB14548">
    <property type="generic name" value="Zinc sulfate, unspecified form"/>
</dbReference>
<dbReference type="CarbonylDB" id="P08603"/>
<dbReference type="GlyConnect" id="722">
    <property type="glycosylation" value="37 N-Linked glycans (9 sites)"/>
</dbReference>
<dbReference type="GlyCosmos" id="P08603">
    <property type="glycosylation" value="9 sites, 55 glycans"/>
</dbReference>
<dbReference type="GlyGen" id="P08603">
    <property type="glycosylation" value="12 sites, 139 N-linked glycans (9 sites), 1 O-linked glycan (1 site)"/>
</dbReference>
<dbReference type="iPTMnet" id="P08603"/>
<dbReference type="PhosphoSitePlus" id="P08603"/>
<dbReference type="SwissPalm" id="P08603"/>
<dbReference type="BioMuta" id="CFH"/>
<dbReference type="DMDM" id="158517847"/>
<dbReference type="CPTAC" id="non-CPTAC-2658"/>
<dbReference type="jPOST" id="P08603"/>
<dbReference type="MassIVE" id="P08603"/>
<dbReference type="PaxDb" id="9606-ENSP00000356399"/>
<dbReference type="PeptideAtlas" id="P08603"/>
<dbReference type="ProteomicsDB" id="52135">
    <molecule id="P08603-1"/>
</dbReference>
<dbReference type="ProteomicsDB" id="52136">
    <molecule id="P08603-2"/>
</dbReference>
<dbReference type="Pumba" id="P08603"/>
<dbReference type="ABCD" id="P08603">
    <property type="antibodies" value="11 sequenced antibodies"/>
</dbReference>
<dbReference type="Antibodypedia" id="3393">
    <property type="antibodies" value="971 antibodies from 49 providers"/>
</dbReference>
<dbReference type="DNASU" id="3075"/>
<dbReference type="Ensembl" id="ENST00000367429.9">
    <property type="protein sequence ID" value="ENSP00000356399.4"/>
    <property type="gene ID" value="ENSG00000000971.17"/>
</dbReference>
<dbReference type="GeneID" id="3075"/>
<dbReference type="KEGG" id="hsa:3075"/>
<dbReference type="MANE-Select" id="ENST00000367429.9">
    <property type="protein sequence ID" value="ENSP00000356399.4"/>
    <property type="RefSeq nucleotide sequence ID" value="NM_000186.4"/>
    <property type="RefSeq protein sequence ID" value="NP_000177.2"/>
</dbReference>
<dbReference type="UCSC" id="uc001gtj.4">
    <molecule id="P08603-1"/>
    <property type="organism name" value="human"/>
</dbReference>
<dbReference type="AGR" id="HGNC:4883"/>
<dbReference type="CTD" id="3075"/>
<dbReference type="DisGeNET" id="3075"/>
<dbReference type="GeneCards" id="CFH"/>
<dbReference type="GeneReviews" id="CFH"/>
<dbReference type="HGNC" id="HGNC:4883">
    <property type="gene designation" value="CFH"/>
</dbReference>
<dbReference type="HPA" id="ENSG00000000971">
    <property type="expression patterns" value="Tissue enriched (liver)"/>
</dbReference>
<dbReference type="MalaCards" id="CFH"/>
<dbReference type="MIM" id="126700">
    <property type="type" value="phenotype"/>
</dbReference>
<dbReference type="MIM" id="134370">
    <property type="type" value="gene"/>
</dbReference>
<dbReference type="MIM" id="235400">
    <property type="type" value="phenotype"/>
</dbReference>
<dbReference type="MIM" id="609814">
    <property type="type" value="phenotype"/>
</dbReference>
<dbReference type="MIM" id="610698">
    <property type="type" value="phenotype"/>
</dbReference>
<dbReference type="neXtProt" id="NX_P08603"/>
<dbReference type="Orphanet" id="544472">
    <property type="disease" value="Atypical hemolytic uremic syndrome with complement gene abnormality"/>
</dbReference>
<dbReference type="Orphanet" id="244275">
    <property type="disease" value="De novo thrombotic microangiopathy after kidney transplantation"/>
</dbReference>
<dbReference type="Orphanet" id="93571">
    <property type="disease" value="Dense deposit disease"/>
</dbReference>
<dbReference type="Orphanet" id="75376">
    <property type="disease" value="Familial drusen"/>
</dbReference>
<dbReference type="Orphanet" id="244242">
    <property type="disease" value="HELLP syndrome"/>
</dbReference>
<dbReference type="Orphanet" id="200421">
    <property type="disease" value="Immunodeficiency with factor H anomaly"/>
</dbReference>
<dbReference type="Orphanet" id="329903">
    <property type="disease" value="Immunoglobulin-mediated membranoproliferative glomerulonephritis"/>
</dbReference>
<dbReference type="PharmGKB" id="PA29261"/>
<dbReference type="VEuPathDB" id="HostDB:ENSG00000000971"/>
<dbReference type="eggNOG" id="ENOG502QVSB">
    <property type="taxonomic scope" value="Eukaryota"/>
</dbReference>
<dbReference type="HOGENOM" id="CLU_003511_0_0_1"/>
<dbReference type="InParanoid" id="P08603"/>
<dbReference type="OrthoDB" id="10051774at2759"/>
<dbReference type="PAN-GO" id="P08603">
    <property type="GO annotations" value="3 GO annotations based on evolutionary models"/>
</dbReference>
<dbReference type="PhylomeDB" id="P08603"/>
<dbReference type="TreeFam" id="TF326157"/>
<dbReference type="PathwayCommons" id="P08603"/>
<dbReference type="Reactome" id="R-HSA-977606">
    <property type="pathway name" value="Regulation of Complement cascade"/>
</dbReference>
<dbReference type="SignaLink" id="P08603"/>
<dbReference type="SIGNOR" id="P08603"/>
<dbReference type="BioGRID-ORCS" id="3075">
    <property type="hits" value="9 hits in 1153 CRISPR screens"/>
</dbReference>
<dbReference type="ChiTaRS" id="CFH">
    <property type="organism name" value="human"/>
</dbReference>
<dbReference type="EvolutionaryTrace" id="P08603"/>
<dbReference type="GeneWiki" id="Factor_H"/>
<dbReference type="GenomeRNAi" id="3075"/>
<dbReference type="Pharos" id="P08603">
    <property type="development level" value="Tbio"/>
</dbReference>
<dbReference type="PRO" id="PR:P08603"/>
<dbReference type="Proteomes" id="UP000005640">
    <property type="component" value="Chromosome 1"/>
</dbReference>
<dbReference type="RNAct" id="P08603">
    <property type="molecule type" value="protein"/>
</dbReference>
<dbReference type="Bgee" id="ENSG00000000971">
    <property type="expression patterns" value="Expressed in urethra and 190 other cell types or tissues"/>
</dbReference>
<dbReference type="ExpressionAtlas" id="P08603">
    <property type="expression patterns" value="baseline and differential"/>
</dbReference>
<dbReference type="GO" id="GO:0072562">
    <property type="term" value="C:blood microparticle"/>
    <property type="evidence" value="ECO:0007005"/>
    <property type="project" value="UniProtKB"/>
</dbReference>
<dbReference type="GO" id="GO:0070062">
    <property type="term" value="C:extracellular exosome"/>
    <property type="evidence" value="ECO:0007005"/>
    <property type="project" value="UniProtKB"/>
</dbReference>
<dbReference type="GO" id="GO:0005576">
    <property type="term" value="C:extracellular region"/>
    <property type="evidence" value="ECO:0000304"/>
    <property type="project" value="Reactome"/>
</dbReference>
<dbReference type="GO" id="GO:0005615">
    <property type="term" value="C:extracellular space"/>
    <property type="evidence" value="ECO:0000318"/>
    <property type="project" value="GO_Central"/>
</dbReference>
<dbReference type="GO" id="GO:1905370">
    <property type="term" value="C:serine-type endopeptidase complex"/>
    <property type="evidence" value="ECO:0000353"/>
    <property type="project" value="ComplexPortal"/>
</dbReference>
<dbReference type="GO" id="GO:0106139">
    <property type="term" value="C:symbiont cell surface"/>
    <property type="evidence" value="ECO:0000314"/>
    <property type="project" value="UniProtKB"/>
</dbReference>
<dbReference type="GO" id="GO:0001851">
    <property type="term" value="F:complement component C3b binding"/>
    <property type="evidence" value="ECO:0000318"/>
    <property type="project" value="GO_Central"/>
</dbReference>
<dbReference type="GO" id="GO:0043395">
    <property type="term" value="F:heparan sulfate proteoglycan binding"/>
    <property type="evidence" value="ECO:0000314"/>
    <property type="project" value="BHF-UCL"/>
</dbReference>
<dbReference type="GO" id="GO:0008201">
    <property type="term" value="F:heparin binding"/>
    <property type="evidence" value="ECO:0000314"/>
    <property type="project" value="BHF-UCL"/>
</dbReference>
<dbReference type="GO" id="GO:0042802">
    <property type="term" value="F:identical protein binding"/>
    <property type="evidence" value="ECO:0000353"/>
    <property type="project" value="IntAct"/>
</dbReference>
<dbReference type="GO" id="GO:0006956">
    <property type="term" value="P:complement activation"/>
    <property type="evidence" value="ECO:0000314"/>
    <property type="project" value="AgBase"/>
</dbReference>
<dbReference type="GO" id="GO:0006957">
    <property type="term" value="P:complement activation, alternative pathway"/>
    <property type="evidence" value="ECO:0007669"/>
    <property type="project" value="UniProtKB-KW"/>
</dbReference>
<dbReference type="GO" id="GO:0006508">
    <property type="term" value="P:proteolysis"/>
    <property type="evidence" value="ECO:0000314"/>
    <property type="project" value="ComplexPortal"/>
</dbReference>
<dbReference type="GO" id="GO:0030449">
    <property type="term" value="P:regulation of complement activation"/>
    <property type="evidence" value="ECO:0000314"/>
    <property type="project" value="MGI"/>
</dbReference>
<dbReference type="GO" id="GO:0030451">
    <property type="term" value="P:regulation of complement activation, alternative pathway"/>
    <property type="evidence" value="ECO:0000314"/>
    <property type="project" value="ComplexPortal"/>
</dbReference>
<dbReference type="GO" id="GO:1903659">
    <property type="term" value="P:regulation of complement-dependent cytotoxicity"/>
    <property type="evidence" value="ECO:0000314"/>
    <property type="project" value="MGI"/>
</dbReference>
<dbReference type="CDD" id="cd00033">
    <property type="entry name" value="CCP"/>
    <property type="match status" value="16"/>
</dbReference>
<dbReference type="FunFam" id="2.10.70.10:FF:000041">
    <property type="entry name" value="Complement factor H"/>
    <property type="match status" value="5"/>
</dbReference>
<dbReference type="FunFam" id="2.10.70.10:FF:000130">
    <property type="entry name" value="Complement factor H"/>
    <property type="match status" value="1"/>
</dbReference>
<dbReference type="FunFam" id="2.10.70.10:FF:000026">
    <property type="entry name" value="Complement inhibitory factor H"/>
    <property type="match status" value="7"/>
</dbReference>
<dbReference type="FunFam" id="2.10.70.10:FF:000054">
    <property type="entry name" value="Complement inhibitory factor H"/>
    <property type="match status" value="1"/>
</dbReference>
<dbReference type="FunFam" id="2.10.70.10:FF:000060">
    <property type="entry name" value="Complement inhibitory factor H"/>
    <property type="match status" value="1"/>
</dbReference>
<dbReference type="Gene3D" id="2.10.70.10">
    <property type="entry name" value="Complement Module, domain 1"/>
    <property type="match status" value="20"/>
</dbReference>
<dbReference type="InterPro" id="IPR051503">
    <property type="entry name" value="ComplSys_Reg/VirEntry_Med"/>
</dbReference>
<dbReference type="InterPro" id="IPR035976">
    <property type="entry name" value="Sushi/SCR/CCP_sf"/>
</dbReference>
<dbReference type="InterPro" id="IPR000436">
    <property type="entry name" value="Sushi_SCR_CCP_dom"/>
</dbReference>
<dbReference type="PANTHER" id="PTHR45785">
    <property type="entry name" value="COMPLEMENT FACTOR H-RELATED"/>
    <property type="match status" value="1"/>
</dbReference>
<dbReference type="PANTHER" id="PTHR45785:SF2">
    <property type="entry name" value="COMPLEMENT FACTOR H-RELATED"/>
    <property type="match status" value="1"/>
</dbReference>
<dbReference type="Pfam" id="PF00084">
    <property type="entry name" value="Sushi"/>
    <property type="match status" value="19"/>
</dbReference>
<dbReference type="SMART" id="SM00032">
    <property type="entry name" value="CCP"/>
    <property type="match status" value="20"/>
</dbReference>
<dbReference type="SUPFAM" id="SSF57535">
    <property type="entry name" value="Complement control module/SCR domain"/>
    <property type="match status" value="18"/>
</dbReference>
<dbReference type="PROSITE" id="PS50923">
    <property type="entry name" value="SUSHI"/>
    <property type="match status" value="19"/>
</dbReference>
<gene>
    <name type="primary">CFH</name>
    <name type="synonym">HF</name>
    <name type="synonym">HF1</name>
    <name type="synonym">HF2</name>
</gene>
<organism>
    <name type="scientific">Homo sapiens</name>
    <name type="common">Human</name>
    <dbReference type="NCBI Taxonomy" id="9606"/>
    <lineage>
        <taxon>Eukaryota</taxon>
        <taxon>Metazoa</taxon>
        <taxon>Chordata</taxon>
        <taxon>Craniata</taxon>
        <taxon>Vertebrata</taxon>
        <taxon>Euteleostomi</taxon>
        <taxon>Mammalia</taxon>
        <taxon>Eutheria</taxon>
        <taxon>Euarchontoglires</taxon>
        <taxon>Primates</taxon>
        <taxon>Haplorrhini</taxon>
        <taxon>Catarrhini</taxon>
        <taxon>Hominidae</taxon>
        <taxon>Homo</taxon>
    </lineage>
</organism>
<comment type="function">
    <text evidence="27 33 37 40 41 49 53 54 56 66">Glycoprotein that plays an essential role in maintaining a well-balanced immune response by modulating complement activation. Acts as a soluble inhibitor of complement, where its binding to self markers such as glycan structures prevents complement activation and amplification on cell surfaces (PubMed:21285368, PubMed:21317894, PubMed:25402769). Accelerates the decay of the complement alternative pathway (AP) C3 convertase C3bBb, thus preventing local formation of more C3b, the central player of the complement amplification loop (PubMed:19503104, PubMed:21317894, PubMed:26700768). As a cofactor of the serine protease factor I, CFH also regulates proteolytic degradation of already-deposited C3b (PubMed:18252712, PubMed:23332154, PubMed:28671664). In addition, mediates several cellular responses through interaction with specific receptors. For example, interacts with CR3/ITGAM receptor and thereby mediates the adhesion of human neutrophils to different pathogens. In turn, these pathogens are phagocytosed and destroyed (PubMed:20008295, PubMed:9558116).</text>
</comment>
<comment type="function">
    <text evidence="49">(Microbial infection) In the mosquito midgut, binds to the surface of parasite P.falciparum gametocytes and protects the parasite from alternative complement pathway-mediated elimination.</text>
</comment>
<comment type="subunit">
    <text evidence="18 25 33 34 37 38 40 56 57 66">Homodimer (PubMed:18005991, PubMed:19505476). Also forms homooligomers (PubMed:19505476). Interacts with complement protein C3b; this interaction inhibits complement activation (PubMed:16601698, PubMed:19503104, PubMed:20378178, PubMed:21285368, PubMed:28671664). Interacts with complement protein C3d (PubMed:20378178, PubMed:21285368, PubMed:29190743). Interacts with CR3/ITGAM; this interaction mediates adhesion of neutrophils to pathogens leading to pathogen clearance (PubMed:20008295, PubMed:9558116). Interacts with complement factor I (PubMed:28671664).</text>
</comment>
<comment type="subunit">
    <text evidence="21">(Microbial infection) Interacts with West nile virus non-structural protein 1 (NS1); this interaction leads to the degradation of C3.</text>
</comment>
<comment type="subunit">
    <text evidence="48 60">(Microbial infection) Interacts with C.albicans GPD2; the interaction is direct and leads to the degradation of C3 which enables the pathogen to evade the host innate immune system.</text>
</comment>
<comment type="subunit">
    <text evidence="32 47">(Microbial infection) Interacts with Neisseria meningitidis protein fHbp.</text>
</comment>
<comment type="subunit">
    <text evidence="50 57">(Microbial infection) Interacts with Borrelia burgdorferi outer surface protein E/OspE; this interaction recruits complement regulator factor H onto the bacterial surface to evade complement-mediated cell lysis.</text>
</comment>
<comment type="subunit">
    <text evidence="52">(Microbial infection) Interacts with Streptococcus pneumoniae protein virulence factor choline-binding protein A/CbpAN; this interaction enables Streptococcus pneumoniae to evade surveillance by human complement system.</text>
</comment>
<comment type="subunit">
    <text evidence="55">(Microbial infection) Interacts with Staphylococcus aureus surface protein serine-aspartate repeat protein E/SdrE; this interaction sequesters CFH on the surface of S.aureus for complement evasion.</text>
</comment>
<comment type="subunit">
    <text evidence="29">(Microbial infection) Interacts with Staphylococcus aureus protein Sbi; this interaction inhibits the complement activation of the alternative pathway.</text>
</comment>
<comment type="subunit">
    <molecule>Isoform 1</molecule>
    <text evidence="49 54">(Microbial infection) Interacts (via sushi 4-6 domains) with P.falciparum surface protein PF92; the interaction recruits CFH onto the merozoite surface preventing complement-mediated cell lysis (PubMed:26700768). The interaction does not affect CFH activity (PubMed:26700768). Interacts (via sushi 6-7 domains) with P.falciparum (strain NF54) GAP50; the interaction occurs in the vector mosquito midgut at the surface of the activated parasite gametocytes; the interaction protects the parasite from alternative complement pathway-mediated elimination (PubMed:23332154).</text>
</comment>
<comment type="subunit">
    <molecule>Isoform 2</molecule>
    <text evidence="49 54">(Microbial infection) Interacts (via sushi 4-6 domains) with P.falciparum surface protein PF92; the interaction recruits FHL-1 isoform onto the merozoite surface preventing complement-mediated cell lysis (PubMed:26700768). The interaction does not affect FHL-1 isoform activity (PubMed:26700768). Interacts (via sushi 6-7 domains) with P.falciparum (strain NF54) GAP50; the interaction occurs in the vector mosquito midgut at the surface of the activated parasite gametocytes; the interaction protects the parasite from alternative complement pathway-mediated elimination (PubMed:23332154).</text>
</comment>
<comment type="interaction">
    <interactant intactId="EBI-1223708">
        <id>P08603</id>
    </interactant>
    <interactant intactId="EBI-1222467">
        <id>P02649</id>
        <label>APOE</label>
    </interactant>
    <organismsDiffer>false</organismsDiffer>
    <experiments>8</experiments>
</comment>
<comment type="interaction">
    <interactant intactId="EBI-1223708">
        <id>P08603</id>
    </interactant>
    <interactant intactId="EBI-905851">
        <id>P01024</id>
        <label>C3</label>
    </interactant>
    <organismsDiffer>false</organismsDiffer>
    <experiments>6</experiments>
</comment>
<comment type="interaction">
    <interactant intactId="EBI-1223708">
        <id>P08603</id>
    </interactant>
    <interactant intactId="EBI-6863145">
        <id>PRO_0000005908</id>
        <label>C3</label>
        <dbReference type="UniProtKB" id="P01024"/>
    </interactant>
    <organismsDiffer>false</organismsDiffer>
    <experiments>4</experiments>
</comment>
<comment type="interaction">
    <interactant intactId="EBI-1223708">
        <id>P08603</id>
    </interactant>
    <interactant intactId="EBI-6863106">
        <id>PRO_0000005915</id>
        <label>C3</label>
        <dbReference type="UniProtKB" id="P01024"/>
    </interactant>
    <organismsDiffer>false</organismsDiffer>
    <experiments>2</experiments>
</comment>
<comment type="interaction">
    <interactant intactId="EBI-1223708">
        <id>P08603</id>
    </interactant>
    <interactant intactId="EBI-1223708">
        <id>P08603</id>
        <label>CFH</label>
    </interactant>
    <organismsDiffer>false</organismsDiffer>
    <experiments>5</experiments>
</comment>
<comment type="interaction">
    <interactant intactId="EBI-1223708">
        <id>P08603</id>
    </interactant>
    <interactant intactId="EBI-1395983">
        <id>P02741</id>
        <label>CRP</label>
    </interactant>
    <organismsDiffer>false</organismsDiffer>
    <experiments>39</experiments>
</comment>
<comment type="interaction">
    <interactant intactId="EBI-1223708">
        <id>P08603</id>
    </interactant>
    <interactant intactId="EBI-22033103">
        <id>PRO_0000023526</id>
        <label>CRP</label>
        <dbReference type="UniProtKB" id="P02741"/>
    </interactant>
    <organismsDiffer>false</organismsDiffer>
    <experiments>3</experiments>
</comment>
<comment type="interaction">
    <interactant intactId="EBI-1223708">
        <id>P08603</id>
    </interactant>
    <interactant intactId="EBI-11574553">
        <id>P26022</id>
        <label>PTX3</label>
    </interactant>
    <organismsDiffer>false</organismsDiffer>
    <experiments>15</experiments>
</comment>
<comment type="interaction">
    <interactant intactId="EBI-1223708">
        <id>P08603</id>
    </interactant>
    <interactant intactId="EBI-22114950">
        <id>PRO_0000023545</id>
        <label>PTX3</label>
        <dbReference type="UniProtKB" id="P26022"/>
    </interactant>
    <organismsDiffer>false</organismsDiffer>
    <experiments>8</experiments>
</comment>
<comment type="interaction">
    <interactant intactId="EBI-1223708">
        <id>P08603</id>
    </interactant>
    <interactant intactId="EBI-2296927">
        <id>P02769</id>
        <label>ALB</label>
    </interactant>
    <organismsDiffer>true</organismsDiffer>
    <experiments>10</experiments>
</comment>
<comment type="interaction">
    <interactant intactId="EBI-1223708">
        <id>P08603</id>
    </interactant>
    <interactant intactId="EBI-6403567">
        <id>P16946</id>
        <label>ennX</label>
    </interactant>
    <organismsDiffer>true</organismsDiffer>
    <experiments>2</experiments>
</comment>
<comment type="interaction">
    <interactant intactId="EBI-1223708">
        <id>P08603</id>
    </interactant>
    <interactant intactId="EBI-15758684">
        <id>Q9JXV4</id>
        <label>fhbP</label>
    </interactant>
    <organismsDiffer>true</organismsDiffer>
    <experiments>6</experiments>
</comment>
<comment type="interaction">
    <interactant intactId="EBI-1223708">
        <id>P08603</id>
    </interactant>
    <interactant intactId="EBI-5281124">
        <id>P13605</id>
        <label>FMOD</label>
    </interactant>
    <organismsDiffer>true</organismsDiffer>
    <experiments>4</experiments>
</comment>
<comment type="interaction">
    <interactant intactId="EBI-1223708">
        <id>P08603</id>
    </interactant>
    <interactant intactId="EBI-12498321">
        <id>A0A024A2C9</id>
        <label>lph</label>
    </interactant>
    <organismsDiffer>true</organismsDiffer>
    <experiments>6</experiments>
</comment>
<comment type="interaction">
    <interactant intactId="EBI-1223708">
        <id>P08603</id>
    </interactant>
    <interactant intactId="EBI-26369465">
        <id>Q932F7</id>
        <label>sdrE</label>
    </interactant>
    <organismsDiffer>true</organismsDiffer>
    <experiments>4</experiments>
</comment>
<comment type="interaction">
    <interactant intactId="EBI-22027829">
        <id>P08603-1</id>
    </interactant>
    <interactant intactId="EBI-1395983">
        <id>P02741</id>
        <label>CRP</label>
    </interactant>
    <organismsDiffer>false</organismsDiffer>
    <experiments>3</experiments>
</comment>
<comment type="interaction">
    <interactant intactId="EBI-12684810">
        <id>P08603-2</id>
    </interactant>
    <interactant intactId="EBI-1395983">
        <id>P02741</id>
        <label>CRP</label>
    </interactant>
    <organismsDiffer>false</organismsDiffer>
    <experiments>8</experiments>
</comment>
<comment type="interaction">
    <interactant intactId="EBI-12684810">
        <id>P08603-2</id>
    </interactant>
    <interactant intactId="EBI-11574553">
        <id>P26022</id>
        <label>PTX3</label>
    </interactant>
    <organismsDiffer>false</organismsDiffer>
    <experiments>2</experiments>
</comment>
<comment type="interaction">
    <interactant intactId="EBI-12684810">
        <id>P08603-2</id>
    </interactant>
    <interactant intactId="EBI-22114950">
        <id>PRO_0000023545</id>
        <label>PTX3</label>
        <dbReference type="UniProtKB" id="P26022"/>
    </interactant>
    <organismsDiffer>false</organismsDiffer>
    <experiments>2</experiments>
</comment>
<comment type="interaction">
    <interactant intactId="EBI-22114230">
        <id>PRO_0000005894</id>
    </interactant>
    <interactant intactId="EBI-1395983">
        <id>P02741</id>
        <label>CRP</label>
    </interactant>
    <organismsDiffer>false</organismsDiffer>
    <experiments>5</experiments>
</comment>
<comment type="subcellular location">
    <subcellularLocation>
        <location>Secreted</location>
    </subcellularLocation>
</comment>
<comment type="subcellular location">
    <text evidence="49">(Microbial infection) In the mosquito midgut, localizes to P.falciparum (NF54 strain) macrogamete and young zygote cell membranes.</text>
</comment>
<comment type="alternative products">
    <event type="alternative splicing"/>
    <isoform>
        <id>P08603-1</id>
        <name>1</name>
        <sequence type="displayed"/>
    </isoform>
    <isoform>
        <id>P08603-2</id>
        <name>2</name>
        <name>FHL-1</name>
        <sequence type="described" ref="VSP_001190 VSP_001191"/>
    </isoform>
</comment>
<comment type="tissue specificity">
    <text evidence="42 51 59 62">Expressed in the retinal pigment epithelium (at protein level) (PubMed:25136834). CFH is one of the most abundant complement components in blood where the liver is the major source of CFH protein in vivo. in addition, CFH is secreted by additional cell types including monocytes, fibroblasts, or endothelial cells (PubMed:2139673, PubMed:25136834, PubMed:2968404, PubMed:6444659).</text>
</comment>
<comment type="domain">
    <text evidence="27 40">Sushi 1-3 domain represents the minimal unit capable of cofactor activity (PubMed:18252712). The property to discriminate self surfaces from non-self surfaces depends on the C-terminal region made of Sushis 19-20 (PubMed:21285368).</text>
</comment>
<comment type="PTM">
    <text evidence="51">Sulfated on tyrosine residues.</text>
</comment>
<comment type="PTM">
    <text evidence="71 72">According to a report, Asn-217 is not glycosylated (PubMed:17591618). Another study observed glycosylation at this position (PubMed:19139490).</text>
</comment>
<comment type="disease" evidence="26">
    <disease id="DI-02606">
        <name>Basal laminar drusen</name>
        <acronym>BLD</acronym>
        <description>Drusen are extracellular deposits that accumulate below the retinal pigment epithelium on Bruch membrane. Basal laminar drusen refers to an early adult-onset drusen phenotype that shows a pattern of uniform small, slightly raised yellow subretinal nodules randomly scattered in the macula. In later stages, these drusen often become more numerous, with clustered groups of drusen scattered throughout the retina. In time these small basal laminar drusen may expand and ultimately lead to a serous pigment epithelial detachment of the macula that may result in vision loss.</description>
        <dbReference type="MIM" id="126700"/>
    </disease>
    <text>The gene represented in this entry is involved in disease pathogenesis.</text>
</comment>
<comment type="disease" evidence="4 5 6 7 9 13 19 64">
    <disease id="DI-01377">
        <name>Complement factor H deficiency</name>
        <acronym>CFHD</acronym>
        <description>A disorder that can manifest as several different phenotypes, including asymptomatic, recurrent bacterial infections, and renal failure. Laboratory features usually include decreased serum levels of factor H, complement component C3, and a decrease in other terminal complement components, indicating activation of the alternative complement pathway. It is associated with a number of renal diseases with variable clinical presentation and progression, including membranoproliferative glomerulonephritis and atypical hemolytic uremic syndrome.</description>
        <dbReference type="MIM" id="609814"/>
    </disease>
    <text>The disease is caused by variants affecting the gene represented in this entry.</text>
</comment>
<comment type="disease" evidence="2 3 8 10 11 13 18 39 65">
    <disease id="DI-01704">
        <name>Hemolytic uremic syndrome, atypical, 1</name>
        <acronym>AHUS1</acronym>
        <description>An atypical form of hemolytic uremic syndrome. It is a complex genetic disease characterized by microangiopathic hemolytic anemia, thrombocytopenia, renal failure and absence of episodes of enterocolitis and diarrhea. In contrast to typical hemolytic uremic syndrome, atypical forms have a poorer prognosis, with higher death rates and frequent progression to end-stage renal disease.</description>
        <dbReference type="MIM" id="235400"/>
    </disease>
    <text>Disease susceptibility is associated with variants affecting the gene represented in this entry. Other genes may play a role in modifying the phenotype.</text>
</comment>
<comment type="disease" evidence="43">
    <disease id="DI-00058">
        <name>Macular degeneration, age-related, 4</name>
        <acronym>ARMD4</acronym>
        <description>A form of age-related macular degeneration, a multifactorial eye disease and the most common cause of irreversible vision loss in the developed world. In most patients, the disease is manifest as ophthalmoscopically visible yellowish accumulations of protein and lipid that lie beneath the retinal pigment epithelium and within an elastin-containing structure known as Bruch membrane.</description>
        <dbReference type="MIM" id="610698"/>
    </disease>
    <text>Disease susceptibility is associated with variants affecting the gene represented in this entry.</text>
</comment>
<comment type="sequence caution" evidence="70">
    <conflict type="frameshift">
        <sequence resource="EMBL-CDS" id="CAB41739"/>
    </conflict>
</comment>
<comment type="online information" name="CFHbase">
    <link uri="https://databases.lovd.nl/shared/genes/CFH"/>
    <text>CFH mutation db</text>
</comment>
<feature type="signal peptide" evidence="61">
    <location>
        <begin position="1"/>
        <end position="18"/>
    </location>
</feature>
<feature type="chain" id="PRO_0000005894" description="Complement factor H">
    <location>
        <begin position="19"/>
        <end position="1231"/>
    </location>
</feature>
<feature type="domain" description="Sushi 1" evidence="1">
    <location>
        <begin position="19"/>
        <end position="82"/>
    </location>
</feature>
<feature type="domain" description="Sushi 2" evidence="1">
    <location>
        <begin position="83"/>
        <end position="143"/>
    </location>
</feature>
<feature type="domain" description="Sushi 3" evidence="1">
    <location>
        <begin position="144"/>
        <end position="207"/>
    </location>
</feature>
<feature type="domain" description="Sushi 4" evidence="1">
    <location>
        <begin position="208"/>
        <end position="264"/>
    </location>
</feature>
<feature type="domain" description="Sushi 5" evidence="1">
    <location>
        <begin position="265"/>
        <end position="322"/>
    </location>
</feature>
<feature type="domain" description="Sushi 6" evidence="1">
    <location>
        <begin position="324"/>
        <end position="386"/>
    </location>
</feature>
<feature type="domain" description="Sushi 7" evidence="1">
    <location>
        <begin position="387"/>
        <end position="444"/>
    </location>
</feature>
<feature type="domain" description="Sushi 8" evidence="1">
    <location>
        <begin position="446"/>
        <end position="507"/>
    </location>
</feature>
<feature type="domain" description="Sushi 9" evidence="1">
    <location>
        <begin position="515"/>
        <end position="566"/>
    </location>
</feature>
<feature type="domain" description="Sushi 10" evidence="1">
    <location>
        <begin position="567"/>
        <end position="625"/>
    </location>
</feature>
<feature type="domain" description="Sushi 11" evidence="1">
    <location>
        <begin position="628"/>
        <end position="686"/>
    </location>
</feature>
<feature type="domain" description="Sushi 12" evidence="1">
    <location>
        <begin position="689"/>
        <end position="746"/>
    </location>
</feature>
<feature type="domain" description="Sushi 13" evidence="1">
    <location>
        <begin position="751"/>
        <end position="805"/>
    </location>
</feature>
<feature type="domain" description="Sushi 14" evidence="1">
    <location>
        <begin position="809"/>
        <end position="866"/>
    </location>
</feature>
<feature type="domain" description="Sushi 15" evidence="1">
    <location>
        <begin position="868"/>
        <end position="928"/>
    </location>
</feature>
<feature type="domain" description="Sushi 16" evidence="1">
    <location>
        <begin position="929"/>
        <end position="986"/>
    </location>
</feature>
<feature type="domain" description="Sushi 17" evidence="1">
    <location>
        <begin position="987"/>
        <end position="1045"/>
    </location>
</feature>
<feature type="domain" description="Sushi 18" evidence="1">
    <location>
        <begin position="1046"/>
        <end position="1104"/>
    </location>
</feature>
<feature type="domain" description="Sushi 19" evidence="1">
    <location>
        <begin position="1107"/>
        <end position="1165"/>
    </location>
</feature>
<feature type="domain" description="Sushi 20" evidence="1">
    <location>
        <begin position="1170"/>
        <end position="1230"/>
    </location>
</feature>
<feature type="glycosylation site" description="N-linked (GlcNAc...) (complex) asparagine" evidence="30">
    <location>
        <position position="217"/>
    </location>
</feature>
<feature type="glycosylation site" description="N-linked (GlcNAc...) asparagine" evidence="17 23 31 58">
    <location>
        <position position="529"/>
    </location>
</feature>
<feature type="glycosylation site" description="N-linked (GlcNAc...) asparagine" evidence="23">
    <location>
        <position position="718"/>
    </location>
</feature>
<feature type="glycosylation site" description="N-linked (GlcNAc...) asparagine" evidence="23 31">
    <location>
        <position position="802"/>
    </location>
</feature>
<feature type="glycosylation site" description="N-linked (GlcNAc...) asparagine" evidence="23">
    <location>
        <position position="822"/>
    </location>
</feature>
<feature type="glycosylation site" description="N-linked (GlcNAc...) (complex) asparagine" evidence="12 23 30 31 36">
    <location>
        <position position="882"/>
    </location>
</feature>
<feature type="glycosylation site" description="N-linked (GlcNAc...) (complex) asparagine" evidence="17 23 30 31">
    <location>
        <position position="911"/>
    </location>
</feature>
<feature type="glycosylation site" description="N-linked (GlcNAc...) (complex) asparagine" evidence="23 30 31">
    <location>
        <position position="1029"/>
    </location>
</feature>
<feature type="glycosylation site" description="N-linked (GlcNAc...) asparagine" evidence="23">
    <location>
        <position position="1095"/>
    </location>
</feature>
<feature type="disulfide bond" evidence="27 33 56">
    <location>
        <begin position="21"/>
        <end position="66"/>
    </location>
</feature>
<feature type="disulfide bond" evidence="27 33 56">
    <location>
        <begin position="52"/>
        <end position="80"/>
    </location>
</feature>
<feature type="disulfide bond" evidence="27 33 56">
    <location>
        <begin position="85"/>
        <end position="129"/>
    </location>
</feature>
<feature type="disulfide bond" evidence="27 33 56">
    <location>
        <begin position="114"/>
        <end position="141"/>
    </location>
</feature>
<feature type="disulfide bond" evidence="33 56">
    <location>
        <begin position="146"/>
        <end position="192"/>
    </location>
</feature>
<feature type="disulfide bond" evidence="33 56">
    <location>
        <begin position="178"/>
        <end position="205"/>
    </location>
</feature>
<feature type="disulfide bond" evidence="33 56">
    <location>
        <begin position="210"/>
        <end position="251"/>
    </location>
</feature>
<feature type="disulfide bond" evidence="33 56">
    <location>
        <begin position="237"/>
        <end position="262"/>
    </location>
</feature>
<feature type="disulfide bond" evidence="1">
    <location>
        <begin position="267"/>
        <end position="309"/>
    </location>
</feature>
<feature type="disulfide bond" evidence="56">
    <location>
        <begin position="294"/>
        <end position="320"/>
    </location>
</feature>
<feature type="disulfide bond" evidence="24 32 47 56">
    <location>
        <begin position="325"/>
        <end position="374"/>
    </location>
</feature>
<feature type="disulfide bond" evidence="24 32 47 56">
    <location>
        <begin position="357"/>
        <end position="385"/>
    </location>
</feature>
<feature type="disulfide bond" evidence="22 24 32 47">
    <location>
        <begin position="389"/>
        <end position="431"/>
    </location>
</feature>
<feature type="disulfide bond" evidence="22 24 32 47">
    <location>
        <begin position="416"/>
        <end position="442"/>
    </location>
</feature>
<feature type="disulfide bond" evidence="24">
    <location>
        <begin position="448"/>
        <end position="494"/>
    </location>
</feature>
<feature type="disulfide bond" evidence="24">
    <location>
        <begin position="477"/>
        <end position="505"/>
    </location>
</feature>
<feature type="disulfide bond" evidence="52">
    <location>
        <begin position="509"/>
        <end position="553"/>
    </location>
</feature>
<feature type="disulfide bond" evidence="52">
    <location>
        <begin position="536"/>
        <end position="564"/>
    </location>
</feature>
<feature type="disulfide bond" evidence="46">
    <location>
        <begin position="569"/>
        <end position="611"/>
    </location>
</feature>
<feature type="disulfide bond" evidence="46">
    <location>
        <begin position="597"/>
        <end position="623"/>
    </location>
</feature>
<feature type="disulfide bond" evidence="46">
    <location>
        <begin position="630"/>
        <end position="673"/>
    </location>
</feature>
<feature type="disulfide bond" evidence="46">
    <location>
        <begin position="659"/>
        <end position="684"/>
    </location>
</feature>
<feature type="disulfide bond" evidence="35 46">
    <location>
        <begin position="691"/>
        <end position="733"/>
    </location>
</feature>
<feature type="disulfide bond" evidence="35 46">
    <location>
        <begin position="719"/>
        <end position="744"/>
    </location>
</feature>
<feature type="disulfide bond" evidence="35">
    <location>
        <begin position="753"/>
        <end position="792"/>
    </location>
</feature>
<feature type="disulfide bond" evidence="35">
    <location>
        <begin position="781"/>
        <end position="803"/>
    </location>
</feature>
<feature type="disulfide bond" evidence="1">
    <location>
        <begin position="811"/>
        <end position="853"/>
    </location>
</feature>
<feature type="disulfide bond" evidence="1">
    <location>
        <begin position="839"/>
        <end position="864"/>
    </location>
</feature>
<feature type="disulfide bond" evidence="63">
    <location>
        <begin position="870"/>
        <end position="915"/>
    </location>
</feature>
<feature type="disulfide bond" evidence="63">
    <location>
        <begin position="901"/>
        <end position="926"/>
    </location>
</feature>
<feature type="disulfide bond" evidence="28 63">
    <location>
        <begin position="931"/>
        <end position="973"/>
    </location>
</feature>
<feature type="disulfide bond" evidence="28 63">
    <location>
        <begin position="959"/>
        <end position="984"/>
    </location>
</feature>
<feature type="disulfide bond" evidence="1">
    <location>
        <begin position="989"/>
        <end position="1032"/>
    </location>
</feature>
<feature type="disulfide bond" evidence="1">
    <location>
        <begin position="1018"/>
        <end position="1043"/>
    </location>
</feature>
<feature type="disulfide bond" evidence="45">
    <location>
        <begin position="1048"/>
        <end position="1091"/>
    </location>
</feature>
<feature type="disulfide bond" evidence="45">
    <location>
        <begin position="1077"/>
        <end position="1102"/>
    </location>
</feature>
<feature type="disulfide bond" evidence="18 38 40 45 50 53 57">
    <location>
        <begin position="1109"/>
        <end position="1152"/>
    </location>
</feature>
<feature type="disulfide bond" evidence="18 38 40 45 50 53 57">
    <location>
        <begin position="1138"/>
        <end position="1163"/>
    </location>
</feature>
<feature type="disulfide bond" evidence="18 38 40 45 50 53 57">
    <location>
        <begin position="1167"/>
        <end position="1218"/>
    </location>
</feature>
<feature type="disulfide bond" evidence="18 38 40 45 50 53 57">
    <location>
        <begin position="1201"/>
        <end position="1228"/>
    </location>
</feature>
<feature type="splice variant" id="VSP_001190" description="In isoform 2." evidence="68 69">
    <original>KTCS</original>
    <variation>SFTL</variation>
    <location>
        <begin position="446"/>
        <end position="449"/>
    </location>
</feature>
<feature type="splice variant" id="VSP_001191" description="In isoform 2." evidence="68 69">
    <location>
        <begin position="450"/>
        <end position="1231"/>
    </location>
</feature>
<feature type="sequence variant" id="VAR_023836" description="Confirmed at protein level; dbSNP:rs800292." evidence="14 15 44 67">
    <original>V</original>
    <variation>I</variation>
    <location>
        <position position="62"/>
    </location>
</feature>
<feature type="sequence variant" id="VAR_025864" description="In AHUS1." evidence="11">
    <original>R</original>
    <variation>G</variation>
    <location>
        <position position="78"/>
    </location>
</feature>
<feature type="sequence variant" id="VAR_031978" description="In CFHD; with membranoproliferative glomerulonephritis; dbSNP:rs121913058." evidence="13">
    <original>R</original>
    <variation>L</variation>
    <location>
        <position position="127"/>
    </location>
</feature>
<feature type="sequence variant" id="VAR_031979" description="In CFHD; with membranoproliferative glomerulonephritis; affects binding of factor H to C3b and shows defective complement regulation." evidence="19">
    <location>
        <position position="224"/>
    </location>
</feature>
<feature type="sequence variant" id="VAR_063648" description="In AHUS1." evidence="39">
    <original>C</original>
    <variation>Y</variation>
    <location>
        <position position="325"/>
    </location>
</feature>
<feature type="sequence variant" id="VAR_031980" description="In AHUS1; dbSNP:rs201671665." evidence="13">
    <original>Q</original>
    <variation>K</variation>
    <location>
        <position position="400"/>
    </location>
</feature>
<feature type="sequence variant" id="VAR_001979" description="Associated with ARMD4; dbSNP:rs1061170." evidence="15 16 20 26 58">
    <original>Y</original>
    <variation>H</variation>
    <location>
        <position position="402"/>
    </location>
</feature>
<feature type="sequence variant" id="VAR_031981" description="In CFHD; with membranoproliferative glomerulonephritis; dbSNP:rs121913056." evidence="13">
    <original>C</original>
    <variation>S</variation>
    <location>
        <position position="431"/>
    </location>
</feature>
<feature type="sequence variant" id="VAR_043892" description="In dbSNP:rs1061171." evidence="58">
    <original>T</original>
    <variation>R</variation>
    <location>
        <position position="493"/>
    </location>
</feature>
<feature type="sequence variant" id="VAR_019405" description="In CFHD; dbSNP:rs121913052." evidence="64">
    <original>C</original>
    <variation>R</variation>
    <location>
        <position position="536"/>
    </location>
</feature>
<feature type="sequence variant" id="VAR_025092" description="In dbSNP:rs35453854." evidence="67">
    <original>I</original>
    <variation>T</variation>
    <location>
        <position position="551"/>
    </location>
</feature>
<feature type="sequence variant" id="VAR_043893" description="Associated with basal laminar drusen; dbSNP:rs757756991." evidence="26">
    <original>R</original>
    <variation>G</variation>
    <location>
        <position position="567"/>
    </location>
</feature>
<feature type="sequence variant" id="VAR_063649" description="In AHUS1; dbSNP:rs148165372." evidence="39">
    <original>V</original>
    <variation>I</variation>
    <location>
        <position position="609"/>
    </location>
</feature>
<feature type="sequence variant" id="VAR_025865" description="In AHUS1." evidence="10">
    <original>C</original>
    <variation>W</variation>
    <location>
        <position position="630"/>
    </location>
</feature>
<feature type="sequence variant" id="VAR_031982" description="In CFHD; with membranoproliferative glomerulonephritis." evidence="13">
    <original>C</original>
    <variation>S</variation>
    <location>
        <position position="673"/>
    </location>
</feature>
<feature type="sequence variant" id="VAR_031983" description="In AHUS1; dbSNP:rs1391815797." evidence="13">
    <original>C</original>
    <variation>Y</variation>
    <location>
        <position position="673"/>
    </location>
</feature>
<feature type="sequence variant" id="VAR_025866" description="In AHUS1; variant confirmed at protein level; dbSNP:rs762443267." evidence="10 44">
    <original>E</original>
    <variation>K</variation>
    <location>
        <position position="850"/>
    </location>
</feature>
<feature type="sequence variant" id="VAR_025093" description="In dbSNP:rs515299." evidence="67">
    <original>S</original>
    <variation>I</variation>
    <location>
        <position position="890"/>
    </location>
</feature>
<feature type="sequence variant" id="VAR_031984" description="In AHUS1; dbSNP:rs1573076722." evidence="13">
    <original>H</original>
    <variation>R</variation>
    <location>
        <position position="893"/>
    </location>
</feature>
<feature type="sequence variant" id="VAR_031985" description="In AHUS1." evidence="13">
    <original>C</original>
    <variation>S</variation>
    <location>
        <position position="915"/>
    </location>
</feature>
<feature type="sequence variant" id="VAR_020261" description="Associated with hemolytic uremic syndrome and basal laminar drusen; dbSNP:rs1065489." evidence="11 26 39 67">
    <original>E</original>
    <variation>D</variation>
    <location>
        <position position="936"/>
    </location>
</feature>
<feature type="sequence variant" id="VAR_025867" description="In AHUS1; dbSNP:rs149474608." evidence="11">
    <original>Q</original>
    <variation>H</variation>
    <location>
        <position position="950"/>
    </location>
</feature>
<feature type="sequence variant" id="VAR_025868" description="In AHUS1; dbSNP:rs777049051." evidence="11">
    <original>Y</original>
    <variation>H</variation>
    <location>
        <position position="951"/>
    </location>
</feature>
<feature type="sequence variant" id="VAR_025869" description="In AHUS1; dbSNP:rs145975787." evidence="6 8">
    <original>T</original>
    <variation>M</variation>
    <location>
        <position position="956"/>
    </location>
</feature>
<feature type="sequence variant" id="VAR_019406" description="In CFHD; variant confirmed at protein level; dbSNP:rs121913053." evidence="44 64">
    <original>C</original>
    <variation>Y</variation>
    <location>
        <position position="959"/>
    </location>
</feature>
<feature type="sequence variant" id="VAR_025870" description="In AHUS1." evidence="10">
    <original>W</original>
    <variation>C</variation>
    <location>
        <position position="978"/>
    </location>
</feature>
<feature type="sequence variant" id="VAR_055683" description="In dbSNP:rs17575212.">
    <original>N</original>
    <variation>T</variation>
    <location>
        <position position="997"/>
    </location>
</feature>
<feature type="sequence variant" id="VAR_025094" evidence="67">
    <original>V</original>
    <variation>I</variation>
    <location>
        <position position="1007"/>
    </location>
</feature>
<feature type="sequence variant" id="VAR_043894" description="In dbSNP:rs534399.">
    <original>V</original>
    <variation>L</variation>
    <location>
        <position position="1007"/>
    </location>
</feature>
<feature type="sequence variant" id="VAR_055684" description="In dbSNP:rs11539862.">
    <original>A</original>
    <variation>T</variation>
    <location>
        <position position="1010"/>
    </location>
</feature>
<feature type="sequence variant" id="VAR_025095" description="In dbSNP:rs34362004." evidence="67">
    <original>T</original>
    <variation>I</variation>
    <location>
        <position position="1017"/>
    </location>
</feature>
<feature type="sequence variant" id="VAR_025871" description="In AHUS1." evidence="10">
    <original>Y</original>
    <variation>F</variation>
    <location>
        <position position="1021"/>
    </location>
</feature>
<feature type="sequence variant" id="VAR_025872" description="In AHUS1." evidence="10">
    <original>C</original>
    <variation>R</variation>
    <location>
        <position position="1043"/>
    </location>
</feature>
<feature type="sequence variant" id="VAR_025096" description="Associated with basal laminar drusen; dbSNP:rs35274867." evidence="26 67">
    <original>N</original>
    <variation>Y</variation>
    <location>
        <position position="1050"/>
    </location>
</feature>
<feature type="sequence variant" id="VAR_025097" description="In dbSNP:rs35343172." evidence="67">
    <original>I</original>
    <variation>T</variation>
    <location>
        <position position="1059"/>
    </location>
</feature>
<feature type="sequence variant" id="VAR_025873" description="In CFHD; dbSNP:rs62625015." evidence="7 8">
    <original>Q</original>
    <variation>E</variation>
    <location>
        <position position="1076"/>
    </location>
</feature>
<feature type="sequence variant" id="VAR_043895" description="Associated with basal laminar drusen; dbSNP:rs121913062." evidence="26">
    <original>R</original>
    <variation>S</variation>
    <location>
        <position position="1078"/>
    </location>
</feature>
<feature type="sequence variant" id="VAR_025874" description="In CFHD; dbSNP:rs575109631." evidence="7 8">
    <original>D</original>
    <variation>G</variation>
    <location>
        <position position="1119"/>
    </location>
</feature>
<feature type="sequence variant" id="VAR_025875" description="In AHUS1." evidence="10">
    <original>V</original>
    <variation>G</variation>
    <location>
        <position position="1134"/>
    </location>
</feature>
<feature type="sequence variant" id="VAR_025876" description="In AHUS1." evidence="10">
    <original>Y</original>
    <variation>D</variation>
    <location>
        <position position="1142"/>
    </location>
</feature>
<feature type="sequence variant" id="VAR_043896" description="Confirmed at protein level; dbSNP:rs15809." evidence="44">
    <original>Q</original>
    <variation>E</variation>
    <location>
        <position position="1143"/>
    </location>
</feature>
<feature type="sequence variant" id="VAR_025877" description="In AHUS1." evidence="10">
    <original>W</original>
    <variation>R</variation>
    <location>
        <position position="1157"/>
    </location>
</feature>
<feature type="sequence variant" id="VAR_025878" description="In AHUS1." evidence="11">
    <original>C</original>
    <variation>W</variation>
    <location>
        <position position="1163"/>
    </location>
</feature>
<feature type="sequence variant" id="VAR_063650" description="In AHUS1." evidence="39">
    <original>I</original>
    <variation>L</variation>
    <location>
        <position position="1169"/>
    </location>
</feature>
<feature type="sequence variant" id="VAR_063651" description="In AHUS1." evidence="39">
    <original>W</original>
    <variation>C</variation>
    <location>
        <position position="1183"/>
    </location>
</feature>
<feature type="sequence variant" id="VAR_025879" description="In AHUS1; about 40% loss of C3b binding." evidence="6 8 13 18">
    <original>W</original>
    <variation>L</variation>
    <location>
        <position position="1183"/>
    </location>
</feature>
<feature type="sequence variant" id="VAR_025880" description="In AHUS1." evidence="9 10">
    <original>W</original>
    <variation>R</variation>
    <location>
        <position position="1183"/>
    </location>
</feature>
<feature type="sequence variant" id="VAR_025881" description="In CFHD." evidence="7 8">
    <original>T</original>
    <variation>R</variation>
    <location>
        <position position="1184"/>
    </location>
</feature>
<feature type="sequence variant" id="VAR_019407" description="In AHUS1; dbSNP:rs121913055." evidence="6 8">
    <original>L</original>
    <variation>R</variation>
    <location>
        <position position="1189"/>
    </location>
</feature>
<feature type="sequence variant" id="VAR_019408" description="In AHUS1; dbSNP:rs460897." evidence="2 8">
    <original>S</original>
    <variation>L</variation>
    <location>
        <position position="1191"/>
    </location>
</feature>
<feature type="sequence variant" id="VAR_025882" description="In AHUS1; dbSNP:rs761877050." evidence="8">
    <original>G</original>
    <variation>D</variation>
    <location>
        <position position="1194"/>
    </location>
</feature>
<feature type="sequence variant" id="VAR_025883" description="In AHUS1; dbSNP:rs460184." evidence="6 8">
    <original>V</original>
    <variation>A</variation>
    <location>
        <position position="1197"/>
    </location>
</feature>
<feature type="sequence variant" id="VAR_025884" description="In AHUS1; about 30% loss of C3b binding." evidence="11 18">
    <original>E</original>
    <variation>A</variation>
    <location>
        <position position="1198"/>
    </location>
</feature>
<feature type="sequence variant" id="VAR_031986" description="In AHUS1." evidence="13">
    <original>F</original>
    <variation>S</variation>
    <location>
        <position position="1199"/>
    </location>
</feature>
<feature type="sequence variant" id="VAR_025885" description="In CFHD and ARMD4; rare penetrant mutation that confers high risk of age-related macular degeneration; dbSNP:rs121913059." evidence="5 8 43">
    <original>R</original>
    <variation>C</variation>
    <location>
        <position position="1210"/>
    </location>
</feature>
<feature type="sequence variant" id="VAR_025886" description="In AHUS1; dbSNP:rs121913051." evidence="8 65">
    <original>R</original>
    <variation>G</variation>
    <location>
        <position position="1215"/>
    </location>
</feature>
<feature type="sequence variant" id="VAR_025887" description="In CFHD." evidence="5 8">
    <original>R</original>
    <variation>Q</variation>
    <location>
        <position position="1215"/>
    </location>
</feature>
<feature type="sequence variant" id="VAR_019409" description="In AHUS1." evidence="3">
    <original>YPTCAKR</original>
    <variation>FQS</variation>
    <location>
        <begin position="1225"/>
        <end position="1231"/>
    </location>
</feature>
<feature type="sequence variant" id="VAR_025888" description="In AHUS1; atypical." evidence="10">
    <original>P</original>
    <variation>S</variation>
    <location>
        <position position="1226"/>
    </location>
</feature>
<feature type="mutagenesis site" description="About 10% loss of heparin-binding." evidence="24">
    <original>H</original>
    <variation>A</variation>
    <location>
        <position position="337"/>
    </location>
</feature>
<feature type="mutagenesis site" description="About 20% loss of heparin-binding." evidence="24">
    <original>R</original>
    <variation>A</variation>
    <location>
        <position position="341"/>
    </location>
</feature>
<feature type="mutagenesis site" description="About 50% loss of C3b binding." evidence="18">
    <original>R</original>
    <variation>A</variation>
    <location>
        <position position="1182"/>
    </location>
</feature>
<feature type="mutagenesis site" description="About 20% loss of C3b binding." evidence="18">
    <original>K</original>
    <variation>A</variation>
    <location>
        <position position="1186"/>
    </location>
</feature>
<feature type="mutagenesis site" description="About 50% loss of C3b binding." evidence="18">
    <original>K</original>
    <variation>A</variation>
    <location>
        <position position="1188"/>
    </location>
</feature>
<feature type="sequence conflict" description="In Ref. 8; AA sequence." evidence="70" ref="8">
    <original>C</original>
    <variation>Q</variation>
    <location>
        <position position="21"/>
    </location>
</feature>
<feature type="sequence conflict" description="In Ref. 8; AA sequence." evidence="70" ref="8">
    <original>T</original>
    <variation>V</variation>
    <location>
        <position position="30"/>
    </location>
</feature>
<feature type="sequence conflict" description="In Ref. 8; AA sequence." evidence="70" ref="8">
    <original>T</original>
    <variation>Q</variation>
    <location>
        <position position="34"/>
    </location>
</feature>
<feature type="sequence conflict" description="In Ref. 5; CAB41739." evidence="70" ref="5">
    <original>RP</original>
    <variation>IL</variation>
    <location>
        <begin position="53"/>
        <end position="54"/>
    </location>
</feature>
<feature type="strand" evidence="80">
    <location>
        <begin position="21"/>
        <end position="23"/>
    </location>
</feature>
<feature type="strand" evidence="83">
    <location>
        <begin position="29"/>
        <end position="33"/>
    </location>
</feature>
<feature type="strand" evidence="83">
    <location>
        <begin position="47"/>
        <end position="52"/>
    </location>
</feature>
<feature type="strand" evidence="83">
    <location>
        <begin position="62"/>
        <end position="66"/>
    </location>
</feature>
<feature type="strand" evidence="83">
    <location>
        <begin position="68"/>
        <end position="74"/>
    </location>
</feature>
<feature type="strand" evidence="83">
    <location>
        <begin position="94"/>
        <end position="105"/>
    </location>
</feature>
<feature type="strand" evidence="83">
    <location>
        <begin position="109"/>
        <end position="114"/>
    </location>
</feature>
<feature type="strand" evidence="83">
    <location>
        <begin position="118"/>
        <end position="123"/>
    </location>
</feature>
<feature type="strand" evidence="83">
    <location>
        <begin position="126"/>
        <end position="129"/>
    </location>
</feature>
<feature type="strand" evidence="83">
    <location>
        <begin position="131"/>
        <end position="134"/>
    </location>
</feature>
<feature type="strand" evidence="83">
    <location>
        <begin position="140"/>
        <end position="143"/>
    </location>
</feature>
<feature type="strand" evidence="81">
    <location>
        <begin position="155"/>
        <end position="158"/>
    </location>
</feature>
<feature type="strand" evidence="83">
    <location>
        <begin position="159"/>
        <end position="162"/>
    </location>
</feature>
<feature type="strand" evidence="83">
    <location>
        <begin position="172"/>
        <end position="175"/>
    </location>
</feature>
<feature type="strand" evidence="83">
    <location>
        <begin position="182"/>
        <end position="186"/>
    </location>
</feature>
<feature type="strand" evidence="83">
    <location>
        <begin position="188"/>
        <end position="192"/>
    </location>
</feature>
<feature type="strand" evidence="83">
    <location>
        <begin position="196"/>
        <end position="200"/>
    </location>
</feature>
<feature type="strand" evidence="83">
    <location>
        <begin position="204"/>
        <end position="207"/>
    </location>
</feature>
<feature type="strand" evidence="83">
    <location>
        <begin position="218"/>
        <end position="222"/>
    </location>
</feature>
<feature type="strand" evidence="83">
    <location>
        <begin position="232"/>
        <end position="237"/>
    </location>
</feature>
<feature type="strand" evidence="83">
    <location>
        <begin position="241"/>
        <end position="245"/>
    </location>
</feature>
<feature type="strand" evidence="83">
    <location>
        <begin position="247"/>
        <end position="252"/>
    </location>
</feature>
<feature type="strand" evidence="83">
    <location>
        <begin position="255"/>
        <end position="258"/>
    </location>
</feature>
<feature type="strand" evidence="83">
    <location>
        <begin position="262"/>
        <end position="264"/>
    </location>
</feature>
<feature type="strand" evidence="86">
    <location>
        <begin position="333"/>
        <end position="335"/>
    </location>
</feature>
<feature type="helix" evidence="86">
    <location>
        <begin position="338"/>
        <end position="341"/>
    </location>
</feature>
<feature type="helix" evidence="86">
    <location>
        <begin position="342"/>
        <end position="344"/>
    </location>
</feature>
<feature type="strand" evidence="86">
    <location>
        <begin position="352"/>
        <end position="357"/>
    </location>
</feature>
<feature type="strand" evidence="86">
    <location>
        <begin position="366"/>
        <end position="375"/>
    </location>
</feature>
<feature type="strand" evidence="86">
    <location>
        <begin position="378"/>
        <end position="383"/>
    </location>
</feature>
<feature type="strand" evidence="86">
    <location>
        <begin position="386"/>
        <end position="390"/>
    </location>
</feature>
<feature type="turn" evidence="91">
    <location>
        <begin position="400"/>
        <end position="403"/>
    </location>
</feature>
<feature type="strand" evidence="86">
    <location>
        <begin position="405"/>
        <end position="407"/>
    </location>
</feature>
<feature type="strand" evidence="91">
    <location>
        <begin position="411"/>
        <end position="413"/>
    </location>
</feature>
<feature type="strand" evidence="78">
    <location>
        <begin position="415"/>
        <end position="417"/>
    </location>
</feature>
<feature type="strand" evidence="78">
    <location>
        <begin position="420"/>
        <end position="422"/>
    </location>
</feature>
<feature type="helix" evidence="91">
    <location>
        <begin position="423"/>
        <end position="425"/>
    </location>
</feature>
<feature type="strand" evidence="91">
    <location>
        <begin position="428"/>
        <end position="432"/>
    </location>
</feature>
<feature type="strand" evidence="91">
    <location>
        <begin position="435"/>
        <end position="438"/>
    </location>
</feature>
<feature type="strand" evidence="82">
    <location>
        <begin position="447"/>
        <end position="449"/>
    </location>
</feature>
<feature type="helix" evidence="82">
    <location>
        <begin position="450"/>
        <end position="452"/>
    </location>
</feature>
<feature type="strand" evidence="82">
    <location>
        <begin position="456"/>
        <end position="459"/>
    </location>
</feature>
<feature type="strand" evidence="82">
    <location>
        <begin position="465"/>
        <end position="468"/>
    </location>
</feature>
<feature type="strand" evidence="82">
    <location>
        <begin position="472"/>
        <end position="477"/>
    </location>
</feature>
<feature type="strand" evidence="82">
    <location>
        <begin position="484"/>
        <end position="486"/>
    </location>
</feature>
<feature type="strand" evidence="82">
    <location>
        <begin position="488"/>
        <end position="495"/>
    </location>
</feature>
<feature type="strand" evidence="82">
    <location>
        <begin position="498"/>
        <end position="500"/>
    </location>
</feature>
<feature type="strand" evidence="89">
    <location>
        <begin position="508"/>
        <end position="510"/>
    </location>
</feature>
<feature type="strand" evidence="89">
    <location>
        <begin position="515"/>
        <end position="518"/>
    </location>
</feature>
<feature type="strand" evidence="89">
    <location>
        <begin position="524"/>
        <end position="527"/>
    </location>
</feature>
<feature type="strand" evidence="89">
    <location>
        <begin position="531"/>
        <end position="536"/>
    </location>
</feature>
<feature type="strand" evidence="89">
    <location>
        <begin position="547"/>
        <end position="554"/>
    </location>
</feature>
<feature type="strand" evidence="89">
    <location>
        <begin position="557"/>
        <end position="560"/>
    </location>
</feature>
<feature type="strand" evidence="87">
    <location>
        <begin position="578"/>
        <end position="582"/>
    </location>
</feature>
<feature type="strand" evidence="87">
    <location>
        <begin position="585"/>
        <end position="587"/>
    </location>
</feature>
<feature type="strand" evidence="87">
    <location>
        <begin position="592"/>
        <end position="597"/>
    </location>
</feature>
<feature type="strand" evidence="87">
    <location>
        <begin position="602"/>
        <end position="605"/>
    </location>
</feature>
<feature type="strand" evidence="87">
    <location>
        <begin position="607"/>
        <end position="612"/>
    </location>
</feature>
<feature type="strand" evidence="87">
    <location>
        <begin position="615"/>
        <end position="618"/>
    </location>
</feature>
<feature type="strand" evidence="87">
    <location>
        <begin position="622"/>
        <end position="625"/>
    </location>
</feature>
<feature type="strand" evidence="87">
    <location>
        <begin position="637"/>
        <end position="641"/>
    </location>
</feature>
<feature type="strand" evidence="87">
    <location>
        <begin position="654"/>
        <end position="659"/>
    </location>
</feature>
<feature type="strand" evidence="87">
    <location>
        <begin position="663"/>
        <end position="665"/>
    </location>
</feature>
<feature type="strand" evidence="87">
    <location>
        <begin position="669"/>
        <end position="674"/>
    </location>
</feature>
<feature type="strand" evidence="88">
    <location>
        <begin position="675"/>
        <end position="678"/>
    </location>
</feature>
<feature type="strand" evidence="87">
    <location>
        <begin position="684"/>
        <end position="686"/>
    </location>
</feature>
<feature type="strand" evidence="79">
    <location>
        <begin position="700"/>
        <end position="703"/>
    </location>
</feature>
<feature type="strand" evidence="79">
    <location>
        <begin position="714"/>
        <end position="718"/>
    </location>
</feature>
<feature type="strand" evidence="88">
    <location>
        <begin position="723"/>
        <end position="727"/>
    </location>
</feature>
<feature type="strand" evidence="79">
    <location>
        <begin position="729"/>
        <end position="732"/>
    </location>
</feature>
<feature type="strand" evidence="88">
    <location>
        <begin position="737"/>
        <end position="739"/>
    </location>
</feature>
<feature type="strand" evidence="88">
    <location>
        <begin position="743"/>
        <end position="746"/>
    </location>
</feature>
<feature type="strand" evidence="79">
    <location>
        <begin position="757"/>
        <end position="760"/>
    </location>
</feature>
<feature type="helix" evidence="79">
    <location>
        <begin position="765"/>
        <end position="767"/>
    </location>
</feature>
<feature type="strand" evidence="79">
    <location>
        <begin position="769"/>
        <end position="771"/>
    </location>
</feature>
<feature type="strand" evidence="79">
    <location>
        <begin position="790"/>
        <end position="792"/>
    </location>
</feature>
<feature type="strand" evidence="79">
    <location>
        <begin position="797"/>
        <end position="799"/>
    </location>
</feature>
<feature type="strand" evidence="76">
    <location>
        <begin position="870"/>
        <end position="872"/>
    </location>
</feature>
<feature type="strand" evidence="75">
    <location>
        <begin position="879"/>
        <end position="881"/>
    </location>
</feature>
<feature type="strand" evidence="75">
    <location>
        <begin position="883"/>
        <end position="887"/>
    </location>
</feature>
<feature type="strand" evidence="76">
    <location>
        <begin position="889"/>
        <end position="891"/>
    </location>
</feature>
<feature type="strand" evidence="75">
    <location>
        <begin position="895"/>
        <end position="904"/>
    </location>
</feature>
<feature type="strand" evidence="75">
    <location>
        <begin position="906"/>
        <end position="909"/>
    </location>
</feature>
<feature type="strand" evidence="75">
    <location>
        <begin position="911"/>
        <end position="916"/>
    </location>
</feature>
<feature type="strand" evidence="75">
    <location>
        <begin position="925"/>
        <end position="927"/>
    </location>
</feature>
<feature type="strand" evidence="74">
    <location>
        <begin position="940"/>
        <end position="943"/>
    </location>
</feature>
<feature type="strand" evidence="75">
    <location>
        <begin position="950"/>
        <end position="952"/>
    </location>
</feature>
<feature type="strand" evidence="74">
    <location>
        <begin position="957"/>
        <end position="959"/>
    </location>
</feature>
<feature type="strand" evidence="74">
    <location>
        <begin position="965"/>
        <end position="967"/>
    </location>
</feature>
<feature type="strand" evidence="74">
    <location>
        <begin position="971"/>
        <end position="974"/>
    </location>
</feature>
<feature type="strand" evidence="74">
    <location>
        <begin position="977"/>
        <end position="979"/>
    </location>
</feature>
<feature type="strand" evidence="85">
    <location>
        <begin position="1057"/>
        <end position="1059"/>
    </location>
</feature>
<feature type="strand" evidence="85">
    <location>
        <begin position="1065"/>
        <end position="1067"/>
    </location>
</feature>
<feature type="strand" evidence="85">
    <location>
        <begin position="1072"/>
        <end position="1077"/>
    </location>
</feature>
<feature type="strand" evidence="85">
    <location>
        <begin position="1082"/>
        <end position="1085"/>
    </location>
</feature>
<feature type="strand" evidence="85">
    <location>
        <begin position="1087"/>
        <end position="1092"/>
    </location>
</feature>
<feature type="strand" evidence="85">
    <location>
        <begin position="1101"/>
        <end position="1103"/>
    </location>
</feature>
<feature type="strand" evidence="84">
    <location>
        <begin position="1118"/>
        <end position="1122"/>
    </location>
</feature>
<feature type="strand" evidence="84">
    <location>
        <begin position="1126"/>
        <end position="1128"/>
    </location>
</feature>
<feature type="strand" evidence="84">
    <location>
        <begin position="1133"/>
        <end position="1138"/>
    </location>
</feature>
<feature type="strand" evidence="84">
    <location>
        <begin position="1143"/>
        <end position="1146"/>
    </location>
</feature>
<feature type="strand" evidence="84">
    <location>
        <begin position="1148"/>
        <end position="1153"/>
    </location>
</feature>
<feature type="strand" evidence="90">
    <location>
        <begin position="1154"/>
        <end position="1157"/>
    </location>
</feature>
<feature type="strand" evidence="84">
    <location>
        <begin position="1162"/>
        <end position="1164"/>
    </location>
</feature>
<feature type="strand" evidence="90">
    <location>
        <begin position="1167"/>
        <end position="1169"/>
    </location>
</feature>
<feature type="helix" evidence="84">
    <location>
        <begin position="1171"/>
        <end position="1177"/>
    </location>
</feature>
<feature type="strand" evidence="84">
    <location>
        <begin position="1179"/>
        <end position="1181"/>
    </location>
</feature>
<feature type="turn" evidence="84">
    <location>
        <begin position="1182"/>
        <end position="1186"/>
    </location>
</feature>
<feature type="strand" evidence="84">
    <location>
        <begin position="1189"/>
        <end position="1191"/>
    </location>
</feature>
<feature type="strand" evidence="84">
    <location>
        <begin position="1196"/>
        <end position="1201"/>
    </location>
</feature>
<feature type="turn" evidence="77">
    <location>
        <begin position="1202"/>
        <end position="1204"/>
    </location>
</feature>
<feature type="strand" evidence="84">
    <location>
        <begin position="1205"/>
        <end position="1207"/>
    </location>
</feature>
<feature type="strand" evidence="84">
    <location>
        <begin position="1214"/>
        <end position="1217"/>
    </location>
</feature>
<feature type="strand" evidence="84">
    <location>
        <begin position="1228"/>
        <end position="1230"/>
    </location>
</feature>
<name>CFAH_HUMAN</name>
<sequence length="1231" mass="139096">MRLLAKIICLMLWAICVAEDCNELPPRRNTEILTGSWSDQTYPEGTQAIYKCRPGYRSLGNVIMVCRKGEWVALNPLRKCQKRPCGHPGDTPFGTFTLTGGNVFEYGVKAVYTCNEGYQLLGEINYRECDTDGWTNDIPICEVVKCLPVTAPENGKIVSSAMEPDREYHFGQAVRFVCNSGYKIEGDEEMHCSDDGFWSKEKPKCVEISCKSPDVINGSPISQKIIYKENERFQYKCNMGYEYSERGDAVCTESGWRPLPSCEEKSCDNPYIPNGDYSPLRIKHRTGDEITYQCRNGFYPATRGNTAKCTSTGWIPAPRCTLKPCDYPDIKHGGLYHENMRRPYFPVAVGKYYSYYCDEHFETPSGSYWDHIHCTQDGWSPAVPCLRKCYFPYLENGYNQNYGRKFVQGKSIDVACHPGYALPKAQTTVTCMENGWSPTPRCIRVKTCSKSSIDIENGFISESQYTYALKEKAKYQCKLGYVTADGETSGSITCGKDGWSAQPTCIKSCDIPVFMNARTKNDFTWFKLNDTLDYECHDGYESNTGSTTGSIVCGYNGWSDLPICYERECELPKIDVHLVPDRKKDQYKVGEVLKFSCKPGFTIVGPNSVQCYHFGLSPDLPICKEQVQSCGPPPELLNGNVKEKTKEEYGHSEVVEYYCNPRFLMKGPNKIQCVDGEWTTLPVCIVEESTCGDIPELEHGWAQLSSPPYYYGDSVEFNCSESFTMIGHRSITCIHGVWTQLPQCVAIDKLKKCKSSNLIILEEHLKNKKEFDHNSNIRYRCRGKEGWIHTVCINGRWDPEVNCSMAQIQLCPPPPQIPNSHNMTTTLNYRDGEKVSVLCQENYLIQEGEEITCKDGRWQSIPLCVEKIPCSQPPQIEHGTINSSRSSQESYAHGTKLSYTCEGGFRISEENETTCYMGKWSSPPQCEGLPCKSPPEISHGVVAHMSDSYQYGEEVTYKCFEGFGIDGPAIAKCLGEKWSHPPSCIKTDCLSLPSFENAIPMGEKKDVYKAGEQVTYTCATYYKMDGASNVTCINSRWTGRPTCRDTSCVNPPTVQNAYIVSRQMSKYPSGERVRYQCRSPYEMFGDEEVMCLNGNWTEPPQCKDSTGKCGPPPPIDNGDITSFPLSVYAPASSVEYQCQNLYQLEGNKRITCRNGQWSEPPKCLHPCVISREIMENYNIALRWTAKQKLYSRTGESVEFVCKRGYRLSSRSHTLRTTCWDGKLEYPTCAKR</sequence>
<evidence type="ECO:0000255" key="1">
    <source>
        <dbReference type="PROSITE-ProRule" id="PRU00302"/>
    </source>
</evidence>
<evidence type="ECO:0000269" key="2">
    <source>
    </source>
</evidence>
<evidence type="ECO:0000269" key="3">
    <source>
    </source>
</evidence>
<evidence type="ECO:0000269" key="4">
    <source>
    </source>
</evidence>
<evidence type="ECO:0000269" key="5">
    <source>
    </source>
</evidence>
<evidence type="ECO:0000269" key="6">
    <source>
    </source>
</evidence>
<evidence type="ECO:0000269" key="7">
    <source>
    </source>
</evidence>
<evidence type="ECO:0000269" key="8">
    <source>
    </source>
</evidence>
<evidence type="ECO:0000269" key="9">
    <source>
    </source>
</evidence>
<evidence type="ECO:0000269" key="10">
    <source>
    </source>
</evidence>
<evidence type="ECO:0000269" key="11">
    <source>
    </source>
</evidence>
<evidence type="ECO:0000269" key="12">
    <source>
    </source>
</evidence>
<evidence type="ECO:0000269" key="13">
    <source>
    </source>
</evidence>
<evidence type="ECO:0000269" key="14">
    <source>
    </source>
</evidence>
<evidence type="ECO:0000269" key="15">
    <source>
    </source>
</evidence>
<evidence type="ECO:0000269" key="16">
    <source>
    </source>
</evidence>
<evidence type="ECO:0000269" key="17">
    <source>
    </source>
</evidence>
<evidence type="ECO:0000269" key="18">
    <source>
    </source>
</evidence>
<evidence type="ECO:0000269" key="19">
    <source>
    </source>
</evidence>
<evidence type="ECO:0000269" key="20">
    <source>
    </source>
</evidence>
<evidence type="ECO:0000269" key="21">
    <source>
    </source>
</evidence>
<evidence type="ECO:0000269" key="22">
    <source>
    </source>
</evidence>
<evidence type="ECO:0000269" key="23">
    <source>
    </source>
</evidence>
<evidence type="ECO:0000269" key="24">
    <source>
    </source>
</evidence>
<evidence type="ECO:0000269" key="25">
    <source>
    </source>
</evidence>
<evidence type="ECO:0000269" key="26">
    <source>
    </source>
</evidence>
<evidence type="ECO:0000269" key="27">
    <source>
    </source>
</evidence>
<evidence type="ECO:0000269" key="28">
    <source>
    </source>
</evidence>
<evidence type="ECO:0000269" key="29">
    <source>
    </source>
</evidence>
<evidence type="ECO:0000269" key="30">
    <source>
    </source>
</evidence>
<evidence type="ECO:0000269" key="31">
    <source>
    </source>
</evidence>
<evidence type="ECO:0000269" key="32">
    <source>
    </source>
</evidence>
<evidence type="ECO:0000269" key="33">
    <source>
    </source>
</evidence>
<evidence type="ECO:0000269" key="34">
    <source>
    </source>
</evidence>
<evidence type="ECO:0000269" key="35">
    <source>
    </source>
</evidence>
<evidence type="ECO:0000269" key="36">
    <source>
    </source>
</evidence>
<evidence type="ECO:0000269" key="37">
    <source>
    </source>
</evidence>
<evidence type="ECO:0000269" key="38">
    <source>
    </source>
</evidence>
<evidence type="ECO:0000269" key="39">
    <source>
    </source>
</evidence>
<evidence type="ECO:0000269" key="40">
    <source>
    </source>
</evidence>
<evidence type="ECO:0000269" key="41">
    <source>
    </source>
</evidence>
<evidence type="ECO:0000269" key="42">
    <source>
    </source>
</evidence>
<evidence type="ECO:0000269" key="43">
    <source>
    </source>
</evidence>
<evidence type="ECO:0000269" key="44">
    <source>
    </source>
</evidence>
<evidence type="ECO:0000269" key="45">
    <source>
    </source>
</evidence>
<evidence type="ECO:0000269" key="46">
    <source>
    </source>
</evidence>
<evidence type="ECO:0000269" key="47">
    <source>
    </source>
</evidence>
<evidence type="ECO:0000269" key="48">
    <source>
    </source>
</evidence>
<evidence type="ECO:0000269" key="49">
    <source>
    </source>
</evidence>
<evidence type="ECO:0000269" key="50">
    <source>
    </source>
</evidence>
<evidence type="ECO:0000269" key="51">
    <source>
    </source>
</evidence>
<evidence type="ECO:0000269" key="52">
    <source>
    </source>
</evidence>
<evidence type="ECO:0000269" key="53">
    <source>
    </source>
</evidence>
<evidence type="ECO:0000269" key="54">
    <source>
    </source>
</evidence>
<evidence type="ECO:0000269" key="55">
    <source>
    </source>
</evidence>
<evidence type="ECO:0000269" key="56">
    <source>
    </source>
</evidence>
<evidence type="ECO:0000269" key="57">
    <source>
    </source>
</evidence>
<evidence type="ECO:0000269" key="58">
    <source>
    </source>
</evidence>
<evidence type="ECO:0000269" key="59">
    <source>
    </source>
</evidence>
<evidence type="ECO:0000269" key="60">
    <source>
    </source>
</evidence>
<evidence type="ECO:0000269" key="61">
    <source>
    </source>
</evidence>
<evidence type="ECO:0000269" key="62">
    <source>
    </source>
</evidence>
<evidence type="ECO:0000269" key="63">
    <source>
    </source>
</evidence>
<evidence type="ECO:0000269" key="64">
    <source>
    </source>
</evidence>
<evidence type="ECO:0000269" key="65">
    <source>
    </source>
</evidence>
<evidence type="ECO:0000269" key="66">
    <source>
    </source>
</evidence>
<evidence type="ECO:0000269" key="67">
    <source ref="2"/>
</evidence>
<evidence type="ECO:0000303" key="68">
    <source>
    </source>
</evidence>
<evidence type="ECO:0000303" key="69">
    <source>
    </source>
</evidence>
<evidence type="ECO:0000305" key="70"/>
<evidence type="ECO:0000305" key="71">
    <source>
    </source>
</evidence>
<evidence type="ECO:0000305" key="72">
    <source>
    </source>
</evidence>
<evidence type="ECO:0007744" key="73">
    <source>
        <dbReference type="PDB" id="3OXU"/>
    </source>
</evidence>
<evidence type="ECO:0007829" key="74">
    <source>
        <dbReference type="PDB" id="1HCC"/>
    </source>
</evidence>
<evidence type="ECO:0007829" key="75">
    <source>
        <dbReference type="PDB" id="1HFH"/>
    </source>
</evidence>
<evidence type="ECO:0007829" key="76">
    <source>
        <dbReference type="PDB" id="1HFI"/>
    </source>
</evidence>
<evidence type="ECO:0007829" key="77">
    <source>
        <dbReference type="PDB" id="2BZM"/>
    </source>
</evidence>
<evidence type="ECO:0007829" key="78">
    <source>
        <dbReference type="PDB" id="2JGW"/>
    </source>
</evidence>
<evidence type="ECO:0007829" key="79">
    <source>
        <dbReference type="PDB" id="2KMS"/>
    </source>
</evidence>
<evidence type="ECO:0007829" key="80">
    <source>
        <dbReference type="PDB" id="2RLP"/>
    </source>
</evidence>
<evidence type="ECO:0007829" key="81">
    <source>
        <dbReference type="PDB" id="2RLQ"/>
    </source>
</evidence>
<evidence type="ECO:0007829" key="82">
    <source>
        <dbReference type="PDB" id="2UWN"/>
    </source>
</evidence>
<evidence type="ECO:0007829" key="83">
    <source>
        <dbReference type="PDB" id="2WII"/>
    </source>
</evidence>
<evidence type="ECO:0007829" key="84">
    <source>
        <dbReference type="PDB" id="3R62"/>
    </source>
</evidence>
<evidence type="ECO:0007829" key="85">
    <source>
        <dbReference type="PDB" id="3SW0"/>
    </source>
</evidence>
<evidence type="ECO:0007829" key="86">
    <source>
        <dbReference type="PDB" id="4AYI"/>
    </source>
</evidence>
<evidence type="ECO:0007829" key="87">
    <source>
        <dbReference type="PDB" id="4B2R"/>
    </source>
</evidence>
<evidence type="ECO:0007829" key="88">
    <source>
        <dbReference type="PDB" id="4B2S"/>
    </source>
</evidence>
<evidence type="ECO:0007829" key="89">
    <source>
        <dbReference type="PDB" id="4K12"/>
    </source>
</evidence>
<evidence type="ECO:0007829" key="90">
    <source>
        <dbReference type="PDB" id="4ONT"/>
    </source>
</evidence>
<evidence type="ECO:0007829" key="91">
    <source>
        <dbReference type="PDB" id="6ATG"/>
    </source>
</evidence>
<accession>P08603</accession>
<accession>A5PL14</accession>
<accession>P78435</accession>
<accession>Q14570</accession>
<accession>Q2TAZ5</accession>
<accession>Q38G77</accession>
<accession>Q5TFM3</accession>
<accession>Q8N708</accession>
<accession>Q9NU86</accession>
<keyword id="KW-0002">3D-structure</keyword>
<keyword id="KW-0913">Age-related macular degeneration</keyword>
<keyword id="KW-0025">Alternative splicing</keyword>
<keyword id="KW-0179">Complement alternate pathway</keyword>
<keyword id="KW-0903">Direct protein sequencing</keyword>
<keyword id="KW-0225">Disease variant</keyword>
<keyword id="KW-1015">Disulfide bond</keyword>
<keyword id="KW-0325">Glycoprotein</keyword>
<keyword id="KW-1068">Hemolytic uremic syndrome</keyword>
<keyword id="KW-0945">Host-virus interaction</keyword>
<keyword id="KW-0391">Immunity</keyword>
<keyword id="KW-0399">Innate immunity</keyword>
<keyword id="KW-1267">Proteomics identification</keyword>
<keyword id="KW-1185">Reference proteome</keyword>
<keyword id="KW-0677">Repeat</keyword>
<keyword id="KW-0964">Secreted</keyword>
<keyword id="KW-0732">Signal</keyword>
<keyword id="KW-0765">Sulfation</keyword>
<keyword id="KW-0768">Sushi</keyword>